<protein>
    <recommendedName>
        <fullName evidence="55">Aurora kinase B</fullName>
        <ecNumber evidence="8 9 17 42 43 46">2.7.11.1</ecNumber>
    </recommendedName>
    <alternativeName>
        <fullName>Aurora 1</fullName>
    </alternativeName>
    <alternativeName>
        <fullName evidence="57">Aurora- and IPL1-like midbody-associated protein 1</fullName>
        <shortName evidence="57">AIM-1</shortName>
    </alternativeName>
    <alternativeName>
        <fullName evidence="56">Aurora/IPL1-related kinase 2</fullName>
        <shortName evidence="56">ARK-2</shortName>
        <shortName>Aurora-related kinase 2</shortName>
    </alternativeName>
    <alternativeName>
        <fullName>STK-1</fullName>
    </alternativeName>
    <alternativeName>
        <fullName evidence="58">Serine/threonine-protein kinase 12</fullName>
    </alternativeName>
    <alternativeName>
        <fullName>Serine/threonine-protein kinase 5</fullName>
    </alternativeName>
    <alternativeName>
        <fullName evidence="59">Serine/threonine-protein kinase aurora-B</fullName>
    </alternativeName>
</protein>
<comment type="function">
    <text evidence="1 6 7 8 9 10 11 12 13 14 15 17 18 20 22 28 36 38 39 41 42 43 45 46">Serine/threonine-protein kinase component of the chromosomal passenger complex (CPC), a complex that acts as a key regulator of mitosis (PubMed:11516652, PubMed:12925766, PubMed:14610074, PubMed:14722118, PubMed:29449677). The CPC complex has essential functions at the centromere in ensuring correct chromosome alignment and segregation and is required for chromatin-induced microtubule stabilization and spindle assembly (PubMed:11516652, PubMed:12925766, PubMed:14610074, PubMed:14722118, PubMed:26829474). Involved in the bipolar attachment of spindle microtubules to kinetochores and is a key regulator for the onset of cytokinesis during mitosis (PubMed:15249581). Required for central/midzone spindle assembly and cleavage furrow formation (PubMed:12458200, PubMed:12686604). Key component of the cytokinesis checkpoint, a process required to delay abscission to prevent both premature resolution of intercellular chromosome bridges and accumulation of DNA damage: phosphorylates CHMP4C, leading to retain abscission-competent VPS4 (VPS4A and/or VPS4B) at the midbody ring until abscission checkpoint signaling is terminated at late cytokinesis (PubMed:22422861, PubMed:24814515). AURKB phosphorylates the CPC complex subunits BIRC5/survivin, CDCA8/borealin and INCENP (PubMed:11516652, PubMed:12925766, PubMed:14610074). Phosphorylation of INCENP leads to increased AURKB activity (PubMed:11516652, PubMed:12925766, PubMed:14610074). Other known AURKB substrates involved in centromeric functions and mitosis are CENPA, DES/desmin, GPAF, KIF2C, NSUN2, RACGAP1, SEPTIN1, VIM/vimentin, HASPIN, and histone H3 (PubMed:11756469, PubMed:11784863, PubMed:11856369, PubMed:12689593, PubMed:14602875, PubMed:16103226, PubMed:21658950). A positive feedback loop involving HASPIN and AURKB contributes to localization of CPC to centromeres (PubMed:21658950). Phosphorylation of VIM controls vimentin filament segregation in cytokinetic process, whereas histone H3 is phosphorylated at 'Ser-10' and 'Ser-28' during mitosis (H3S10ph and H3S28ph, respectively) (PubMed:11784863, PubMed:11856369). AURKB is also required for kinetochore localization of BUB1 and SGO1 (PubMed:15020684, PubMed:17617734). Phosphorylation of p53/TP53 negatively regulates its transcriptional activity (PubMed:20959462). Key regulator of active promoters in resting B- and T-lymphocytes: acts by mediating phosphorylation of H3S28ph at active promoters in resting B-cells, inhibiting RNF2/RING1B-mediated ubiquitination of histone H2A and enhancing binding and activity of the USP16 deubiquitinase at transcribed genes (By similarity). Acts as an inhibitor of CGAS during mitosis: catalyzes phosphorylation of the N-terminus of CGAS during the G2-M transition, blocking CGAS liquid phase separation and activation, and thereby preventing CGAS-induced autoimmunity (PubMed:33542149). Phosphorylates KRT5 during anaphase and telophase (By similarity). Phosphorylates ATXN10 which promotes phosphorylation of ATXN10 by PLK1 and may play a role in the regulation of cytokinesis and stimulating the proteasomal degradation of ATXN10 (PubMed:25666058).</text>
</comment>
<comment type="catalytic activity">
    <reaction evidence="8 9 42 43 46">
        <text>L-seryl-[protein] + ATP = O-phospho-L-seryl-[protein] + ADP + H(+)</text>
        <dbReference type="Rhea" id="RHEA:17989"/>
        <dbReference type="Rhea" id="RHEA-COMP:9863"/>
        <dbReference type="Rhea" id="RHEA-COMP:11604"/>
        <dbReference type="ChEBI" id="CHEBI:15378"/>
        <dbReference type="ChEBI" id="CHEBI:29999"/>
        <dbReference type="ChEBI" id="CHEBI:30616"/>
        <dbReference type="ChEBI" id="CHEBI:83421"/>
        <dbReference type="ChEBI" id="CHEBI:456216"/>
        <dbReference type="EC" id="2.7.11.1"/>
    </reaction>
</comment>
<comment type="catalytic activity">
    <reaction evidence="17 43 46">
        <text>L-threonyl-[protein] + ATP = O-phospho-L-threonyl-[protein] + ADP + H(+)</text>
        <dbReference type="Rhea" id="RHEA:46608"/>
        <dbReference type="Rhea" id="RHEA-COMP:11060"/>
        <dbReference type="Rhea" id="RHEA-COMP:11605"/>
        <dbReference type="ChEBI" id="CHEBI:15378"/>
        <dbReference type="ChEBI" id="CHEBI:30013"/>
        <dbReference type="ChEBI" id="CHEBI:30616"/>
        <dbReference type="ChEBI" id="CHEBI:61977"/>
        <dbReference type="ChEBI" id="CHEBI:456216"/>
        <dbReference type="EC" id="2.7.11.1"/>
    </reaction>
</comment>
<comment type="activity regulation">
    <text evidence="13 17 20 42">Activity is greatly increased when AURKB is within the CPC complex (PubMed:12925766, PubMed:14722118, PubMed:15249581). In particular, AURKB-phosphorylated INCENP acts as an activator of AURKB (PubMed:14722118, PubMed:15249581). Positive feedback between HASPIN and AURKB contributes to CPC localization (PubMed:14722118, PubMed:15249581). Inhibited by ZM447439 (PubMed:25666058).</text>
</comment>
<comment type="subunit">
    <text evidence="1 6 12 13 14 16 17 19 20 23 25 29 30 33 34 36 37 40 44">Component of the chromosomal passenger complex (CPC) composed of at least BIRC5/survivin, CDCA8/borealin, INCENP, AURKB or AURKC; predominantly independent AURKB- and AURKC-containing complexes exist (PubMed:11516652, PubMed:12925766, PubMed:14722118, PubMed:15249581, PubMed:18591255, PubMed:20562864, PubMed:27332895). Associates with RACGAP1 during M phase (PubMed:12689593). Interacts with SPDYC; this interaction may be required for proper localization of active, Thr-232-phosphorylated AURKB form during prometaphase and metaphase (PubMed:20605920). Interacts with p53/TP53 (PubMed:20959462). Interacts (via the middle kinase domain) with NOC2L (via the N- and C-terminus domains) (PubMed:20959462). Interacts with CDCA1 (PubMed:14602875). Interacts with EVI5 (PubMed:16764853). Interacts with JTB (PubMed:21225229). Interacts with NDC80 (PubMed:14602875). Interacts with PSMA3 (PubMed:14674694). Interacts with RNF2/RING1B (By similarity). Interacts with SEPTIN1 (PubMed:16179162). Interacts with SIRT2 (PubMed:17726514). Interacts with TACC1 (PubMed:15064709). Interacts with TTC28 (PubMed:23036704).</text>
</comment>
<comment type="interaction">
    <interactant intactId="EBI-624291">
        <id>Q96GD4</id>
    </interactant>
    <interactant intactId="EBI-518823">
        <id>O15392</id>
        <label>BIRC5</label>
    </interactant>
    <organismsDiffer>false</organismsDiffer>
    <experiments>13</experiments>
</comment>
<comment type="interaction">
    <interactant intactId="EBI-624291">
        <id>Q96GD4</id>
    </interactant>
    <interactant intactId="EBI-518838">
        <id>O15392-1</id>
        <label>BIRC5</label>
    </interactant>
    <organismsDiffer>false</organismsDiffer>
    <experiments>2</experiments>
</comment>
<comment type="interaction">
    <interactant intactId="EBI-624291">
        <id>Q96GD4</id>
    </interactant>
    <interactant intactId="EBI-518842">
        <id>O15392-2</id>
        <label>BIRC5</label>
    </interactant>
    <organismsDiffer>false</organismsDiffer>
    <experiments>2</experiments>
</comment>
<comment type="interaction">
    <interactant intactId="EBI-624291">
        <id>Q96GD4</id>
    </interactant>
    <interactant intactId="EBI-295634">
        <id>Q16543</id>
        <label>CDC37</label>
    </interactant>
    <organismsDiffer>false</organismsDiffer>
    <experiments>7</experiments>
</comment>
<comment type="interaction">
    <interactant intactId="EBI-624291">
        <id>Q96GD4</id>
    </interactant>
    <interactant intactId="EBI-979174">
        <id>Q53HL2</id>
        <label>CDCA8</label>
    </interactant>
    <organismsDiffer>false</organismsDiffer>
    <experiments>10</experiments>
</comment>
<comment type="interaction">
    <interactant intactId="EBI-624291">
        <id>Q96GD4</id>
    </interactant>
    <interactant intactId="EBI-9248152">
        <id>Q86XJ1</id>
        <label>GAS2L3</label>
    </interactant>
    <organismsDiffer>false</organismsDiffer>
    <experiments>4</experiments>
</comment>
<comment type="interaction">
    <interactant intactId="EBI-624291">
        <id>Q96GD4</id>
    </interactant>
    <interactant intactId="EBI-358900">
        <id>Q16695</id>
        <label>H3-4</label>
    </interactant>
    <organismsDiffer>false</organismsDiffer>
    <experiments>8</experiments>
</comment>
<comment type="interaction">
    <interactant intactId="EBI-624291">
        <id>Q96GD4</id>
    </interactant>
    <interactant intactId="EBI-11323222">
        <id>Q58FG0</id>
        <label>HSP90AA5P</label>
    </interactant>
    <organismsDiffer>false</organismsDiffer>
    <experiments>2</experiments>
</comment>
<comment type="interaction">
    <interactant intactId="EBI-624291">
        <id>Q96GD4</id>
    </interactant>
    <interactant intactId="EBI-352572">
        <id>P08238</id>
        <label>HSP90AB1</label>
    </interactant>
    <organismsDiffer>false</organismsDiffer>
    <experiments>5</experiments>
</comment>
<comment type="interaction">
    <interactant intactId="EBI-624291">
        <id>Q96GD4</id>
    </interactant>
    <interactant intactId="EBI-307907">
        <id>Q9NQS7</id>
        <label>INCENP</label>
    </interactant>
    <organismsDiffer>false</organismsDiffer>
    <experiments>22</experiments>
</comment>
<comment type="interaction">
    <interactant intactId="EBI-624291">
        <id>Q96GD4</id>
    </interactant>
    <interactant intactId="EBI-15767972">
        <id>Q9NQS7-1</id>
        <label>INCENP</label>
    </interactant>
    <organismsDiffer>false</organismsDiffer>
    <experiments>2</experiments>
</comment>
<comment type="interaction">
    <interactant intactId="EBI-624291">
        <id>Q96GD4</id>
    </interactant>
    <interactant intactId="EBI-399080">
        <id>Q92993</id>
        <label>KAT5</label>
    </interactant>
    <organismsDiffer>false</organismsDiffer>
    <experiments>4</experiments>
</comment>
<comment type="interaction">
    <interactant intactId="EBI-624291">
        <id>Q96GD4</id>
    </interactant>
    <interactant intactId="EBI-1996321">
        <id>Q9P2N7</id>
        <label>KLHL13</label>
    </interactant>
    <organismsDiffer>false</organismsDiffer>
    <experiments>2</experiments>
</comment>
<comment type="interaction">
    <interactant intactId="EBI-624291">
        <id>Q96GD4</id>
    </interactant>
    <interactant intactId="EBI-2510152">
        <id>Q9P2J3</id>
        <label>KLHL9</label>
    </interactant>
    <organismsDiffer>false</organismsDiffer>
    <experiments>2</experiments>
</comment>
<comment type="interaction">
    <interactant intactId="EBI-624291">
        <id>Q96GD4</id>
    </interactant>
    <interactant intactId="EBI-1004115">
        <id>Q15691</id>
        <label>MAPRE1</label>
    </interactant>
    <organismsDiffer>false</organismsDiffer>
    <experiments>5</experiments>
</comment>
<comment type="interaction">
    <interactant intactId="EBI-624291">
        <id>Q96GD4</id>
    </interactant>
    <interactant intactId="EBI-78579">
        <id>P06748</id>
        <label>NPM1</label>
    </interactant>
    <organismsDiffer>false</organismsDiffer>
    <experiments>6</experiments>
</comment>
<comment type="interaction">
    <interactant intactId="EBI-624291">
        <id>Q96GD4</id>
    </interactant>
    <interactant intactId="EBI-302388">
        <id>P30153</id>
        <label>PPP2R1A</label>
    </interactant>
    <organismsDiffer>false</organismsDiffer>
    <experiments>3</experiments>
</comment>
<comment type="interaction">
    <interactant intactId="EBI-624291">
        <id>Q96GD4</id>
    </interactant>
    <interactant intactId="EBI-693002">
        <id>Q8WYJ6</id>
        <label>SEPTIN1</label>
    </interactant>
    <organismsDiffer>false</organismsDiffer>
    <experiments>6</experiments>
</comment>
<comment type="interaction">
    <interactant intactId="EBI-624291">
        <id>Q96GD4</id>
    </interactant>
    <interactant intactId="EBI-624278">
        <id>O75410-6</id>
        <label>TACC1</label>
    </interactant>
    <organismsDiffer>false</organismsDiffer>
    <experiments>2</experiments>
</comment>
<comment type="interaction">
    <interactant intactId="EBI-624291">
        <id>Q96GD4</id>
    </interactant>
    <interactant intactId="EBI-2513526">
        <id>Q9HBJ7</id>
        <label>USP29</label>
    </interactant>
    <organismsDiffer>false</organismsDiffer>
    <experiments>3</experiments>
</comment>
<comment type="interaction">
    <interactant intactId="EBI-624291">
        <id>Q96GD4</id>
    </interactant>
    <interactant intactId="EBI-1769146">
        <id>Q99986</id>
        <label>VRK1</label>
    </interactant>
    <organismsDiffer>false</organismsDiffer>
    <experiments>14</experiments>
</comment>
<comment type="subcellular location">
    <subcellularLocation>
        <location evidence="36">Nucleus</location>
    </subcellularLocation>
    <subcellularLocation>
        <location evidence="35">Chromosome</location>
    </subcellularLocation>
    <subcellularLocation>
        <location evidence="7 13 35">Chromosome</location>
        <location evidence="7 13 35">Centromere</location>
    </subcellularLocation>
    <subcellularLocation>
        <location evidence="43">Chromosome</location>
        <location evidence="43">Centromere</location>
        <location evidence="43">Kinetochore</location>
    </subcellularLocation>
    <subcellularLocation>
        <location evidence="6 10 13 34">Cytoplasm</location>
        <location evidence="6 10 13 34">Cytoskeleton</location>
        <location evidence="6 10 13 34">Spindle</location>
    </subcellularLocation>
    <subcellularLocation>
        <location evidence="23 29 40">Midbody</location>
    </subcellularLocation>
    <text evidence="29 34 35">Localizes on chromosome arms and inner centromeres from prophase through metaphase and then transferring to the spindle midzone and midbody from anaphase through cytokinesis (PubMed:20929775). Colocalized with gamma tubulin in the midbody (PubMed:17726514). Proper localization of the active, Thr-232-phosphorylated form during metaphase may be dependent upon interaction with SPDYC (PubMed:20605920). Colocalized with SIRT2 during cytokinesis with the midbody (PubMed:17726514). Localization (and probably targeting of the CPC) to the inner centromere occurs predominantly in regions with overlapping mitosis-specific histone phosphorylations H3pT3 and H2ApT12 (PubMed:20929775).</text>
</comment>
<comment type="alternative products">
    <event type="alternative splicing"/>
    <isoform>
        <id>Q96GD4-1</id>
        <name>1</name>
        <sequence type="displayed"/>
    </isoform>
    <isoform>
        <id>Q96GD4-2</id>
        <name>2</name>
        <name>aurkb-sv1</name>
        <sequence type="described" ref="VSP_044385"/>
    </isoform>
    <isoform>
        <id>Q96GD4-3</id>
        <name>3</name>
        <name>aurkb-sv2</name>
        <sequence type="described" ref="VSP_044384 VSP_044386 VSP_044387"/>
    </isoform>
    <isoform>
        <id>Q96GD4-4</id>
        <name>4</name>
        <sequence type="described" ref="VSP_047103"/>
    </isoform>
    <isoform>
        <id>Q96GD4-5</id>
        <name>5</name>
        <sequence type="described" ref="VSP_044384"/>
    </isoform>
</comment>
<comment type="tissue specificity">
    <text evidence="48 49">High level expression seen in the thymus. It is also expressed in the spleen, lung, testis, colon, placenta and fetal liver. Expressed during S and G2/M phase and expression is up-regulated in cancer cells during M phase.</text>
</comment>
<comment type="tissue specificity">
    <molecule>Isoform 3</molecule>
    <text evidence="31">Not expressed in normal liver, high expression in metastatic liver.</text>
</comment>
<comment type="induction">
    <text evidence="13">Expression is cell cycle-regulated, with a low in G1/S, an increase during G2 and M. Expression decreases again after M phase.</text>
</comment>
<comment type="PTM">
    <text evidence="17 43">The phosphorylation of Thr-232 requires the binding to INCENP and occurs by means of an autophosphorylation mechanism (PubMed:14722118). Thr-232 phosphorylation is indispensable for the AURKB kinase activity (PubMed:14722118, PubMed:26829474).</text>
</comment>
<comment type="PTM">
    <text evidence="43">Acetylated at Lys-215 by KAT5 at kinetochores, increasing AURKB activity and promoting accurate chromosome segregation in mitosis.</text>
</comment>
<comment type="PTM">
    <text evidence="27 32 45">Ubiquitinated by different BCR (BTB-CUL3-RBX1) E3 ubiquitin ligase complexes (PubMed:17543862, PubMed:19995937). Ubiquitinated by the BCR(KLHL9-KLHL13) E3 ubiquitin ligase complex, ubiquitination leads to removal from mitotic chromosomes and is required for cytokinesis (PubMed:17543862). During anaphase, the BCR(KLHL21) E3 ubiquitin ligase complex recruits the CPC complex from chromosomes to the spindle midzone and mediates the ubiquitination of AURKB (PubMed:17543862). Ubiquitination of AURKB by BCR(KLHL21) E3 ubiquitin ligase complex may not lead to its degradation by the proteasome (PubMed:19995937). Deubiquitinated by USP35; inhibiting CDH1-mediated degradation of AURKB (PubMed:29449677).</text>
</comment>
<comment type="disease">
    <text evidence="60">Disruptive regulation of expression is a possible mechanism of the perturbation of chromosomal integrity in cancer cells through its dominant-negative effect on cytokinesis.</text>
</comment>
<comment type="similarity">
    <text evidence="2">Belongs to the protein kinase superfamily. Ser/Thr protein kinase family. Aurora subfamily.</text>
</comment>
<comment type="sequence caution" evidence="59">
    <conflict type="erroneous initiation">
        <sequence resource="EMBL-CDS" id="AAH13300"/>
    </conflict>
    <text>Extended N-terminus.</text>
</comment>
<organism>
    <name type="scientific">Homo sapiens</name>
    <name type="common">Human</name>
    <dbReference type="NCBI Taxonomy" id="9606"/>
    <lineage>
        <taxon>Eukaryota</taxon>
        <taxon>Metazoa</taxon>
        <taxon>Chordata</taxon>
        <taxon>Craniata</taxon>
        <taxon>Vertebrata</taxon>
        <taxon>Euteleostomi</taxon>
        <taxon>Mammalia</taxon>
        <taxon>Eutheria</taxon>
        <taxon>Euarchontoglires</taxon>
        <taxon>Primates</taxon>
        <taxon>Haplorrhini</taxon>
        <taxon>Catarrhini</taxon>
        <taxon>Hominidae</taxon>
        <taxon>Homo</taxon>
    </lineage>
</organism>
<proteinExistence type="evidence at protein level"/>
<feature type="chain" id="PRO_0000085656" description="Aurora kinase B">
    <location>
        <begin position="1"/>
        <end position="344"/>
    </location>
</feature>
<feature type="domain" description="Protein kinase" evidence="2">
    <location>
        <begin position="77"/>
        <end position="327"/>
    </location>
</feature>
<feature type="region of interest" description="Disordered" evidence="4">
    <location>
        <begin position="1"/>
        <end position="22"/>
    </location>
</feature>
<feature type="active site" description="Proton acceptor" evidence="2 3">
    <location>
        <position position="200"/>
    </location>
</feature>
<feature type="binding site" evidence="2">
    <location>
        <begin position="83"/>
        <end position="91"/>
    </location>
    <ligand>
        <name>ATP</name>
        <dbReference type="ChEBI" id="CHEBI:30616"/>
    </ligand>
</feature>
<feature type="binding site" evidence="2">
    <location>
        <position position="106"/>
    </location>
    <ligand>
        <name>ATP</name>
        <dbReference type="ChEBI" id="CHEBI:30616"/>
    </ligand>
</feature>
<feature type="modified residue" description="Phosphothreonine" evidence="61">
    <location>
        <position position="35"/>
    </location>
</feature>
<feature type="modified residue" description="Phosphoserine" evidence="62">
    <location>
        <position position="62"/>
    </location>
</feature>
<feature type="modified residue" description="Phosphothreonine" evidence="62">
    <location>
        <position position="64"/>
    </location>
</feature>
<feature type="modified residue" description="N6-acetyllysine" evidence="43">
    <location>
        <position position="215"/>
    </location>
</feature>
<feature type="modified residue" description="Phosphoserine" evidence="63">
    <location>
        <position position="227"/>
    </location>
</feature>
<feature type="modified residue" description="Phosphothreonine; by autocatalysis" evidence="17 43">
    <location>
        <position position="232"/>
    </location>
</feature>
<feature type="splice variant" id="VSP_047103" description="In isoform 4." evidence="52">
    <location>
        <begin position="1"/>
        <end position="41"/>
    </location>
</feature>
<feature type="splice variant" id="VSP_044384" description="In isoform 3 and isoform 5." evidence="53 54">
    <original>T</original>
    <variation>TR</variation>
    <location>
        <position position="69"/>
    </location>
</feature>
<feature type="splice variant" id="VSP_044385" description="In isoform 2." evidence="54">
    <original>GKFGNVYLAREKKSHFIVALKVLFKSQIEKEGVEHQLRREIEIQAHLHH</original>
    <variation>ALLCLWPEASSVSSPSH</variation>
    <location>
        <begin position="86"/>
        <end position="134"/>
    </location>
</feature>
<feature type="splice variant" id="VSP_044386" description="In isoform 3." evidence="54">
    <original>HHPNILRLY</original>
    <variation>QSWRSWQML</variation>
    <location>
        <begin position="133"/>
        <end position="141"/>
    </location>
</feature>
<feature type="splice variant" id="VSP_044387" description="In isoform 3." evidence="54">
    <location>
        <begin position="142"/>
        <end position="344"/>
    </location>
</feature>
<feature type="sequence variant" id="VAR_040383" description="In dbSNP:rs55878091." evidence="26">
    <original>A</original>
    <variation>V</variation>
    <location>
        <position position="52"/>
    </location>
</feature>
<feature type="sequence variant" id="VAR_027970" description="In dbSNP:rs3027254.">
    <original>H</original>
    <variation>Q</variation>
    <location>
        <position position="100"/>
    </location>
</feature>
<feature type="sequence variant" id="VAR_040384" description="In dbSNP:rs55871613." evidence="26">
    <original>T</original>
    <variation>M</variation>
    <location>
        <position position="179"/>
    </location>
</feature>
<feature type="sequence variant" id="VAR_027971" description="In dbSNP:rs1059476." evidence="5 21 24 47 48 49 50 51">
    <original>M</original>
    <variation>T</variation>
    <location>
        <position position="298"/>
    </location>
</feature>
<feature type="mutagenesis site" description="Leads to loss of kinase activity and severely impairs mitotic progression." evidence="11 13 17 23">
    <original>K</original>
    <variation>R</variation>
    <location>
        <position position="106"/>
    </location>
</feature>
<feature type="mutagenesis site" description="Mimics acetylation, promoting accurate chromosome segregation." evidence="43">
    <original>K</original>
    <variation>Q</variation>
    <location>
        <position position="215"/>
    </location>
</feature>
<feature type="mutagenesis site" description="Abolished acetylation by KAT5, leading to impaired chromosome segregation." evidence="43">
    <original>K</original>
    <variation>R</variation>
    <location>
        <position position="215"/>
    </location>
</feature>
<feature type="sequence conflict" description="In Ref. 5; AAC98891." evidence="59" ref="5">
    <original>RQ</original>
    <variation>DK</variation>
    <location>
        <begin position="14"/>
        <end position="15"/>
    </location>
</feature>
<feature type="sequence conflict" description="In Ref. 4; AAB65786 and 5; AAC98891." evidence="59" ref="4 5">
    <original>E</original>
    <variation>M</variation>
    <location>
        <position position="161"/>
    </location>
</feature>
<feature type="sequence conflict" description="In Ref. 4; AAB65786." evidence="59" ref="4">
    <original>QKS</original>
    <variation>HKT</variation>
    <location>
        <begin position="167"/>
        <end position="169"/>
    </location>
</feature>
<feature type="sequence conflict" description="In Ref. 4; AAB65786." evidence="59" ref="4">
    <original>T</original>
    <variation>TVRR</variation>
    <location>
        <position position="179"/>
    </location>
</feature>
<feature type="sequence conflict" description="In Ref. 5; AAC98891." evidence="59" ref="5">
    <original>I</original>
    <variation>VRAV</variation>
    <location>
        <position position="180"/>
    </location>
</feature>
<feature type="sequence conflict" description="In Ref. 3; BAA82709." evidence="59" ref="3">
    <original>P</original>
    <variation>T</variation>
    <location>
        <position position="226"/>
    </location>
</feature>
<feature type="sequence conflict" description="In Ref. 3; BAA82709." evidence="59" ref="3">
    <original>MH</original>
    <variation>ID</variation>
    <location>
        <begin position="249"/>
        <end position="250"/>
    </location>
</feature>
<feature type="sequence conflict" description="In Ref. 3; BAA82709." evidence="59" ref="3">
    <location>
        <position position="271"/>
    </location>
</feature>
<feature type="helix" evidence="64">
    <location>
        <begin position="74"/>
        <end position="76"/>
    </location>
</feature>
<feature type="strand" evidence="64">
    <location>
        <begin position="77"/>
        <end position="82"/>
    </location>
</feature>
<feature type="strand" evidence="64">
    <location>
        <begin position="89"/>
        <end position="96"/>
    </location>
</feature>
<feature type="turn" evidence="64">
    <location>
        <begin position="97"/>
        <end position="99"/>
    </location>
</feature>
<feature type="strand" evidence="64">
    <location>
        <begin position="102"/>
        <end position="109"/>
    </location>
</feature>
<feature type="helix" evidence="64">
    <location>
        <begin position="110"/>
        <end position="116"/>
    </location>
</feature>
<feature type="helix" evidence="64">
    <location>
        <begin position="119"/>
        <end position="130"/>
    </location>
</feature>
<feature type="strand" evidence="64">
    <location>
        <begin position="140"/>
        <end position="145"/>
    </location>
</feature>
<feature type="strand" evidence="64">
    <location>
        <begin position="147"/>
        <end position="155"/>
    </location>
</feature>
<feature type="helix" evidence="64">
    <location>
        <begin position="162"/>
        <end position="169"/>
    </location>
</feature>
<feature type="helix" evidence="64">
    <location>
        <begin position="174"/>
        <end position="193"/>
    </location>
</feature>
<feature type="helix" evidence="64">
    <location>
        <begin position="203"/>
        <end position="205"/>
    </location>
</feature>
<feature type="strand" evidence="64">
    <location>
        <begin position="206"/>
        <end position="208"/>
    </location>
</feature>
<feature type="strand" evidence="64">
    <location>
        <begin position="214"/>
        <end position="216"/>
    </location>
</feature>
<feature type="helix" evidence="64">
    <location>
        <begin position="242"/>
        <end position="245"/>
    </location>
</feature>
<feature type="helix" evidence="64">
    <location>
        <begin position="253"/>
        <end position="268"/>
    </location>
</feature>
<feature type="helix" evidence="64">
    <location>
        <begin position="278"/>
        <end position="286"/>
    </location>
</feature>
<feature type="helix" evidence="64">
    <location>
        <begin position="298"/>
        <end position="307"/>
    </location>
</feature>
<feature type="helix" evidence="64">
    <location>
        <begin position="312"/>
        <end position="314"/>
    </location>
</feature>
<feature type="helix" evidence="64">
    <location>
        <begin position="318"/>
        <end position="322"/>
    </location>
</feature>
<feature type="helix" evidence="64">
    <location>
        <begin position="325"/>
        <end position="330"/>
    </location>
</feature>
<accession>Q96GD4</accession>
<accession>B4DNM4</accession>
<accession>C7G533</accession>
<accession>C7G534</accession>
<accession>C7G535</accession>
<accession>D3DTR4</accession>
<accession>J9JID1</accession>
<accession>O14630</accession>
<accession>O60446</accession>
<accession>O95083</accession>
<accession>Q96DV5</accession>
<accession>Q9UQ46</accession>
<name>AURKB_HUMAN</name>
<reference key="1">
    <citation type="journal article" date="1998" name="Biochem. Biophys. Res. Commun.">
        <title>cDNA cloning, expression, subcellular localization, and chromosomal assignment of mammalian aurora homologues, aurora-related kinase (ARK) 1 and 2.</title>
        <authorList>
            <person name="Shindo M."/>
            <person name="Nakano H."/>
            <person name="Kuroyanagi H."/>
            <person name="Shirasawa T."/>
            <person name="Mihara M."/>
            <person name="Gilbert D.J."/>
            <person name="Jenkins N.A."/>
            <person name="Copeland N.G."/>
            <person name="Yagita H."/>
            <person name="Okumura K."/>
        </authorList>
    </citation>
    <scope>NUCLEOTIDE SEQUENCE [MRNA] (ISOFORM 1)</scope>
    <scope>VARIANT THR-298</scope>
</reference>
<reference key="2">
    <citation type="journal article" date="1998" name="Cancer Res.">
        <title>Multinuclearity and increased ploidy caused by overexpression of the aurora- and Ipl1-like midbody-associated protein mitotic kinase in human cancer cells.</title>
        <authorList>
            <person name="Tatsuka M."/>
            <person name="Katayama H."/>
            <person name="Ota T."/>
            <person name="Tanaka T."/>
            <person name="Odashima S."/>
            <person name="Suzuki F."/>
            <person name="Terada Y."/>
        </authorList>
    </citation>
    <scope>NUCLEOTIDE SEQUENCE [MRNA] (ISOFORM 1)</scope>
    <scope>TISSUE SPECIFICITY</scope>
    <scope>VARIANT THR-298</scope>
</reference>
<reference key="3">
    <citation type="journal article" date="1998" name="Cytogenet. Cell Genet.">
        <title>Identification and characterization of STK12/Aik2: a human gene related to aurora of Drosophila and yeast IPL1.</title>
        <authorList>
            <person name="Kimura M."/>
            <person name="Matsuda Y."/>
            <person name="Yoshioka T."/>
            <person name="Sumi N."/>
            <person name="Okano Y."/>
        </authorList>
    </citation>
    <scope>NUCLEOTIDE SEQUENCE [MRNA] (ISOFORM 1)</scope>
    <scope>TISSUE SPECIFICITY</scope>
    <scope>VARIANT THR-298</scope>
    <source>
        <tissue>Liver</tissue>
        <tissue>Spleen</tissue>
    </source>
</reference>
<reference key="4">
    <citation type="journal article" date="1999" name="In Silico Biol.">
        <title>In silico cloning of a new protein kinase, Aik2, related to Drosophila aurora using the new tool: EST Blast.</title>
        <authorList>
            <person name="Prigent C."/>
            <person name="Gill R."/>
            <person name="Trower M."/>
            <person name="Sanseau P."/>
        </authorList>
    </citation>
    <scope>NUCLEOTIDE SEQUENCE [MRNA] (ISOFORM 1)</scope>
    <scope>VARIANT THR-298</scope>
</reference>
<reference key="5">
    <citation type="submission" date="1997-07" db="EMBL/GenBank/DDBJ databases">
        <title>Cloning of a novel human gene homologous to mouse STK-1.</title>
        <authorList>
            <person name="Zhang Q."/>
            <person name="Yu L."/>
            <person name="Bi A."/>
        </authorList>
    </citation>
    <scope>NUCLEOTIDE SEQUENCE [MRNA] (ISOFORM 1)</scope>
    <scope>VARIANT THR-298</scope>
</reference>
<reference key="6">
    <citation type="journal article" date="2009" name="Cancer Sci.">
        <title>Expression of Aurora B and alternative variant forms in hepatocellular carcinoma and adjacent tissue.</title>
        <authorList>
            <person name="Yasen M."/>
            <person name="Mizushima H."/>
            <person name="Mogushi K."/>
            <person name="Obulhasim G."/>
            <person name="Miyaguchi K."/>
            <person name="Inoue K."/>
            <person name="Nakahara I."/>
            <person name="Ohta T."/>
            <person name="Aihara A."/>
            <person name="Tanaka S."/>
            <person name="Arii S."/>
            <person name="Tanaka H."/>
        </authorList>
    </citation>
    <scope>NUCLEOTIDE SEQUENCE [MRNA] (ISOFORMS 1; 2 AND 3)</scope>
    <scope>ALTERNATIVE SPLICING</scope>
    <scope>TISSUE SPECIFICITY</scope>
</reference>
<reference key="7">
    <citation type="submission" date="2003-05" db="EMBL/GenBank/DDBJ databases">
        <title>Cloning of human full-length CDSs in BD Creator(TM) system donor vector.</title>
        <authorList>
            <person name="Kalnine N."/>
            <person name="Chen X."/>
            <person name="Rolfs A."/>
            <person name="Halleck A."/>
            <person name="Hines L."/>
            <person name="Eisenstein S."/>
            <person name="Koundinya M."/>
            <person name="Raphael J."/>
            <person name="Moreira D."/>
            <person name="Kelley T."/>
            <person name="LaBaer J."/>
            <person name="Lin Y."/>
            <person name="Phelan M."/>
            <person name="Farmer A."/>
        </authorList>
    </citation>
    <scope>NUCLEOTIDE SEQUENCE [LARGE SCALE MRNA] (ISOFORM 1)</scope>
    <scope>VARIANT THR-298</scope>
</reference>
<reference key="8">
    <citation type="journal article" date="2004" name="Nat. Genet.">
        <title>Complete sequencing and characterization of 21,243 full-length human cDNAs.</title>
        <authorList>
            <person name="Ota T."/>
            <person name="Suzuki Y."/>
            <person name="Nishikawa T."/>
            <person name="Otsuki T."/>
            <person name="Sugiyama T."/>
            <person name="Irie R."/>
            <person name="Wakamatsu A."/>
            <person name="Hayashi K."/>
            <person name="Sato H."/>
            <person name="Nagai K."/>
            <person name="Kimura K."/>
            <person name="Makita H."/>
            <person name="Sekine M."/>
            <person name="Obayashi M."/>
            <person name="Nishi T."/>
            <person name="Shibahara T."/>
            <person name="Tanaka T."/>
            <person name="Ishii S."/>
            <person name="Yamamoto J."/>
            <person name="Saito K."/>
            <person name="Kawai Y."/>
            <person name="Isono Y."/>
            <person name="Nakamura Y."/>
            <person name="Nagahari K."/>
            <person name="Murakami K."/>
            <person name="Yasuda T."/>
            <person name="Iwayanagi T."/>
            <person name="Wagatsuma M."/>
            <person name="Shiratori A."/>
            <person name="Sudo H."/>
            <person name="Hosoiri T."/>
            <person name="Kaku Y."/>
            <person name="Kodaira H."/>
            <person name="Kondo H."/>
            <person name="Sugawara M."/>
            <person name="Takahashi M."/>
            <person name="Kanda K."/>
            <person name="Yokoi T."/>
            <person name="Furuya T."/>
            <person name="Kikkawa E."/>
            <person name="Omura Y."/>
            <person name="Abe K."/>
            <person name="Kamihara K."/>
            <person name="Katsuta N."/>
            <person name="Sato K."/>
            <person name="Tanikawa M."/>
            <person name="Yamazaki M."/>
            <person name="Ninomiya K."/>
            <person name="Ishibashi T."/>
            <person name="Yamashita H."/>
            <person name="Murakawa K."/>
            <person name="Fujimori K."/>
            <person name="Tanai H."/>
            <person name="Kimata M."/>
            <person name="Watanabe M."/>
            <person name="Hiraoka S."/>
            <person name="Chiba Y."/>
            <person name="Ishida S."/>
            <person name="Ono Y."/>
            <person name="Takiguchi S."/>
            <person name="Watanabe S."/>
            <person name="Yosida M."/>
            <person name="Hotuta T."/>
            <person name="Kusano J."/>
            <person name="Kanehori K."/>
            <person name="Takahashi-Fujii A."/>
            <person name="Hara H."/>
            <person name="Tanase T.-O."/>
            <person name="Nomura Y."/>
            <person name="Togiya S."/>
            <person name="Komai F."/>
            <person name="Hara R."/>
            <person name="Takeuchi K."/>
            <person name="Arita M."/>
            <person name="Imose N."/>
            <person name="Musashino K."/>
            <person name="Yuuki H."/>
            <person name="Oshima A."/>
            <person name="Sasaki N."/>
            <person name="Aotsuka S."/>
            <person name="Yoshikawa Y."/>
            <person name="Matsunawa H."/>
            <person name="Ichihara T."/>
            <person name="Shiohata N."/>
            <person name="Sano S."/>
            <person name="Moriya S."/>
            <person name="Momiyama H."/>
            <person name="Satoh N."/>
            <person name="Takami S."/>
            <person name="Terashima Y."/>
            <person name="Suzuki O."/>
            <person name="Nakagawa S."/>
            <person name="Senoh A."/>
            <person name="Mizoguchi H."/>
            <person name="Goto Y."/>
            <person name="Shimizu F."/>
            <person name="Wakebe H."/>
            <person name="Hishigaki H."/>
            <person name="Watanabe T."/>
            <person name="Sugiyama A."/>
            <person name="Takemoto M."/>
            <person name="Kawakami B."/>
            <person name="Yamazaki M."/>
            <person name="Watanabe K."/>
            <person name="Kumagai A."/>
            <person name="Itakura S."/>
            <person name="Fukuzumi Y."/>
            <person name="Fujimori Y."/>
            <person name="Komiyama M."/>
            <person name="Tashiro H."/>
            <person name="Tanigami A."/>
            <person name="Fujiwara T."/>
            <person name="Ono T."/>
            <person name="Yamada K."/>
            <person name="Fujii Y."/>
            <person name="Ozaki K."/>
            <person name="Hirao M."/>
            <person name="Ohmori Y."/>
            <person name="Kawabata A."/>
            <person name="Hikiji T."/>
            <person name="Kobatake N."/>
            <person name="Inagaki H."/>
            <person name="Ikema Y."/>
            <person name="Okamoto S."/>
            <person name="Okitani R."/>
            <person name="Kawakami T."/>
            <person name="Noguchi S."/>
            <person name="Itoh T."/>
            <person name="Shigeta K."/>
            <person name="Senba T."/>
            <person name="Matsumura K."/>
            <person name="Nakajima Y."/>
            <person name="Mizuno T."/>
            <person name="Morinaga M."/>
            <person name="Sasaki M."/>
            <person name="Togashi T."/>
            <person name="Oyama M."/>
            <person name="Hata H."/>
            <person name="Watanabe M."/>
            <person name="Komatsu T."/>
            <person name="Mizushima-Sugano J."/>
            <person name="Satoh T."/>
            <person name="Shirai Y."/>
            <person name="Takahashi Y."/>
            <person name="Nakagawa K."/>
            <person name="Okumura K."/>
            <person name="Nagase T."/>
            <person name="Nomura N."/>
            <person name="Kikuchi H."/>
            <person name="Masuho Y."/>
            <person name="Yamashita R."/>
            <person name="Nakai K."/>
            <person name="Yada T."/>
            <person name="Nakamura Y."/>
            <person name="Ohara O."/>
            <person name="Isogai T."/>
            <person name="Sugano S."/>
        </authorList>
    </citation>
    <scope>NUCLEOTIDE SEQUENCE [LARGE SCALE MRNA] (ISOFORM 4)</scope>
</reference>
<reference key="9">
    <citation type="journal article" date="2006" name="Nature">
        <title>DNA sequence of human chromosome 17 and analysis of rearrangement in the human lineage.</title>
        <authorList>
            <person name="Zody M.C."/>
            <person name="Garber M."/>
            <person name="Adams D.J."/>
            <person name="Sharpe T."/>
            <person name="Harrow J."/>
            <person name="Lupski J.R."/>
            <person name="Nicholson C."/>
            <person name="Searle S.M."/>
            <person name="Wilming L."/>
            <person name="Young S.K."/>
            <person name="Abouelleil A."/>
            <person name="Allen N.R."/>
            <person name="Bi W."/>
            <person name="Bloom T."/>
            <person name="Borowsky M.L."/>
            <person name="Bugalter B.E."/>
            <person name="Butler J."/>
            <person name="Chang J.L."/>
            <person name="Chen C.-K."/>
            <person name="Cook A."/>
            <person name="Corum B."/>
            <person name="Cuomo C.A."/>
            <person name="de Jong P.J."/>
            <person name="DeCaprio D."/>
            <person name="Dewar K."/>
            <person name="FitzGerald M."/>
            <person name="Gilbert J."/>
            <person name="Gibson R."/>
            <person name="Gnerre S."/>
            <person name="Goldstein S."/>
            <person name="Grafham D.V."/>
            <person name="Grocock R."/>
            <person name="Hafez N."/>
            <person name="Hagopian D.S."/>
            <person name="Hart E."/>
            <person name="Norman C.H."/>
            <person name="Humphray S."/>
            <person name="Jaffe D.B."/>
            <person name="Jones M."/>
            <person name="Kamal M."/>
            <person name="Khodiyar V.K."/>
            <person name="LaButti K."/>
            <person name="Laird G."/>
            <person name="Lehoczky J."/>
            <person name="Liu X."/>
            <person name="Lokyitsang T."/>
            <person name="Loveland J."/>
            <person name="Lui A."/>
            <person name="Macdonald P."/>
            <person name="Major J.E."/>
            <person name="Matthews L."/>
            <person name="Mauceli E."/>
            <person name="McCarroll S.A."/>
            <person name="Mihalev A.H."/>
            <person name="Mudge J."/>
            <person name="Nguyen C."/>
            <person name="Nicol R."/>
            <person name="O'Leary S.B."/>
            <person name="Osoegawa K."/>
            <person name="Schwartz D.C."/>
            <person name="Shaw-Smith C."/>
            <person name="Stankiewicz P."/>
            <person name="Steward C."/>
            <person name="Swarbreck D."/>
            <person name="Venkataraman V."/>
            <person name="Whittaker C.A."/>
            <person name="Yang X."/>
            <person name="Zimmer A.R."/>
            <person name="Bradley A."/>
            <person name="Hubbard T."/>
            <person name="Birren B.W."/>
            <person name="Rogers J."/>
            <person name="Lander E.S."/>
            <person name="Nusbaum C."/>
        </authorList>
    </citation>
    <scope>NUCLEOTIDE SEQUENCE [LARGE SCALE GENOMIC DNA]</scope>
</reference>
<reference key="10">
    <citation type="submission" date="2005-09" db="EMBL/GenBank/DDBJ databases">
        <authorList>
            <person name="Mural R.J."/>
            <person name="Istrail S."/>
            <person name="Sutton G.G."/>
            <person name="Florea L."/>
            <person name="Halpern A.L."/>
            <person name="Mobarry C.M."/>
            <person name="Lippert R."/>
            <person name="Walenz B."/>
            <person name="Shatkay H."/>
            <person name="Dew I."/>
            <person name="Miller J.R."/>
            <person name="Flanigan M.J."/>
            <person name="Edwards N.J."/>
            <person name="Bolanos R."/>
            <person name="Fasulo D."/>
            <person name="Halldorsson B.V."/>
            <person name="Hannenhalli S."/>
            <person name="Turner R."/>
            <person name="Yooseph S."/>
            <person name="Lu F."/>
            <person name="Nusskern D.R."/>
            <person name="Shue B.C."/>
            <person name="Zheng X.H."/>
            <person name="Zhong F."/>
            <person name="Delcher A.L."/>
            <person name="Huson D.H."/>
            <person name="Kravitz S.A."/>
            <person name="Mouchard L."/>
            <person name="Reinert K."/>
            <person name="Remington K.A."/>
            <person name="Clark A.G."/>
            <person name="Waterman M.S."/>
            <person name="Eichler E.E."/>
            <person name="Adams M.D."/>
            <person name="Hunkapiller M.W."/>
            <person name="Myers E.W."/>
            <person name="Venter J.C."/>
        </authorList>
    </citation>
    <scope>NUCLEOTIDE SEQUENCE [LARGE SCALE GENOMIC DNA]</scope>
</reference>
<reference key="11">
    <citation type="journal article" date="2004" name="Genome Res.">
        <title>The status, quality, and expansion of the NIH full-length cDNA project: the Mammalian Gene Collection (MGC).</title>
        <authorList>
            <consortium name="The MGC Project Team"/>
        </authorList>
    </citation>
    <scope>NUCLEOTIDE SEQUENCE [LARGE SCALE MRNA] (ISOFORM 5)</scope>
    <scope>VARIANT THR-298</scope>
    <source>
        <tissue>Lung</tissue>
        <tissue>Lymph</tissue>
        <tissue>Muscle</tissue>
    </source>
</reference>
<reference key="12">
    <citation type="journal article" date="2001" name="Curr. Biol.">
        <title>INCENP is required for proper targeting of Survivin to the centromeres and the anaphase spindle during mitosis.</title>
        <authorList>
            <person name="Wheatley S.P."/>
            <person name="Carvalho A."/>
            <person name="Vagnarelli P."/>
            <person name="Earnshaw W.C."/>
        </authorList>
    </citation>
    <scope>IDENTIFICATION IN THE CPC COMPLEX</scope>
    <scope>SUBCELLULAR LOCATION</scope>
    <scope>FUNCTION</scope>
</reference>
<reference key="13">
    <citation type="journal article" date="2001" name="J. Cell Biol.">
        <title>CENP-A is phosphorylated by Aurora B kinase and plays an unexpected role in completion of cytokinesis.</title>
        <authorList>
            <person name="Zeitlin S.G."/>
            <person name="Shelby R.D."/>
            <person name="Sullivan K.F."/>
        </authorList>
    </citation>
    <scope>FUNCTION</scope>
    <scope>SUBCELLULAR LOCATION</scope>
</reference>
<reference key="14">
    <citation type="journal article" date="2001" name="Nat. Rev. Mol. Cell Biol.">
        <title>Mitotic kinases as regulators of cell division and its checkpoints.</title>
        <authorList>
            <person name="Nigg E.A."/>
        </authorList>
    </citation>
    <scope>REVIEW</scope>
</reference>
<reference key="15">
    <citation type="journal article" date="2002" name="Genes Cells">
        <title>Aurora-B phosphorylates Histone H3 at serine28 with regard to the mitotic chromosome condensation.</title>
        <authorList>
            <person name="Goto H."/>
            <person name="Yasui Y."/>
            <person name="Nigg E.A."/>
            <person name="Inagaki M."/>
        </authorList>
    </citation>
    <scope>FUNCTION IN PHOSPHORYLATION OF HISTONE H3</scope>
</reference>
<reference key="16">
    <citation type="journal article" date="2002" name="Mol. Cell. Biol.">
        <title>Mitotic phosphorylation of histone H3: spatio-temporal regulation by mammalian Aurora kinases.</title>
        <authorList>
            <person name="Crosio C."/>
            <person name="Fimia G.M."/>
            <person name="Loury R."/>
            <person name="Kimura M."/>
            <person name="Okano Y."/>
            <person name="Zhou H."/>
            <person name="Sen S."/>
            <person name="Allis C.D."/>
            <person name="Sassone-Corsi P."/>
        </authorList>
    </citation>
    <scope>FUNCTION IN PHOSPHORYLATION OF HISTONE H3</scope>
</reference>
<reference key="17">
    <citation type="journal article" date="2003" name="Dev. Cell">
        <title>Phosphorylation by aurora B converts MgcRacGAP to a RhoGAP during cytokinesis.</title>
        <authorList>
            <person name="Minoshima Y."/>
            <person name="Kawashima T."/>
            <person name="Hirose K."/>
            <person name="Tonozuka Y."/>
            <person name="Kawajiri A."/>
            <person name="Bao Y.C."/>
            <person name="Deng X."/>
            <person name="Tatsuka M."/>
            <person name="Narumiya S."/>
            <person name="May W.S. Jr."/>
            <person name="Nosaka T."/>
            <person name="Semba K."/>
            <person name="Inoue T."/>
            <person name="Satoh T."/>
            <person name="Inagaki M."/>
            <person name="Kitamura T."/>
        </authorList>
    </citation>
    <scope>FUNCTION</scope>
    <scope>INTERACTION WITH RACGAP1</scope>
</reference>
<reference key="18">
    <citation type="journal article" date="2003" name="J. Biol. Chem.">
        <title>Aurora-B regulates the cleavage furrow-specific vimentin phosphorylation in the cytokinetic process.</title>
        <authorList>
            <person name="Goto H."/>
            <person name="Yasui Y."/>
            <person name="Kawajiri A."/>
            <person name="Nigg E.A."/>
            <person name="Terada Y."/>
            <person name="Tatsuka M."/>
            <person name="Nagata K."/>
            <person name="Inagaki M."/>
        </authorList>
    </citation>
    <scope>FUNCTION</scope>
    <scope>SUBCELLULAR LOCATION</scope>
</reference>
<reference key="19">
    <citation type="journal article" date="2003" name="Mol. Biol. Cell">
        <title>Functional significance of the specific sites phosphorylated in desmin at cleavage furrow: Aurora-B may phosphorylate and regulate type III intermediate filaments during cytokinesis coordinatedly with Rho-kinase.</title>
        <authorList>
            <person name="Kawajiri A."/>
            <person name="Yasui Y."/>
            <person name="Goto H."/>
            <person name="Tatsuka M."/>
            <person name="Takahashi M."/>
            <person name="Nagata K."/>
            <person name="Inagaki M."/>
        </authorList>
    </citation>
    <scope>FUNCTION</scope>
    <scope>MUTAGENESIS OF LYS-106</scope>
</reference>
<reference key="20">
    <citation type="journal article" date="2003" name="Mol. Biol. Cell">
        <title>Exploring the functional interactions between Aurora B, INCENP, and survivin in mitosis.</title>
        <authorList>
            <person name="Honda R."/>
            <person name="Korner R."/>
            <person name="Nigg E.A."/>
        </authorList>
    </citation>
    <scope>IDENTIFICATION IN THE CPC COMPLEX</scope>
    <scope>FUNCTION OF THE CPC COMPLEX</scope>
    <scope>INDUCTION</scope>
    <scope>SUBCELLULAR LOCATION</scope>
    <scope>ACTIVITY REGULATION</scope>
    <scope>MUTAGENESIS OF LYS-106</scope>
</reference>
<reference key="21">
    <citation type="journal article" date="2003" name="Mol. Cell. Biochem.">
        <title>Human Aurora-B binds to a proteasome alpha-subunit HC8 and undergoes degradation in a proteasome-dependent manner.</title>
        <authorList>
            <person name="Shu F."/>
            <person name="Guo S."/>
            <person name="Dang Y."/>
            <person name="Qi M."/>
            <person name="Zhou G."/>
            <person name="Guo Z."/>
            <person name="Zhang Y."/>
            <person name="Wu C."/>
            <person name="Zhao S."/>
            <person name="Yu L."/>
        </authorList>
    </citation>
    <scope>INTERACTION WITH PSMA3</scope>
</reference>
<reference key="22">
    <citation type="journal article" date="2004" name="J. Biol. Chem.">
        <title>Aurora-B phosphorylation in vitro identifies a residue of survivin that is essential for its localization and binding to inner centromere protein (INCENP) in vivo.</title>
        <authorList>
            <person name="Wheatley S.P."/>
            <person name="Henzing A.J."/>
            <person name="Dodson H."/>
            <person name="Khaled W."/>
            <person name="Earnshaw W.C."/>
        </authorList>
    </citation>
    <scope>FUNCTION</scope>
</reference>
<reference key="23">
    <citation type="journal article" date="2004" name="J. Biol. Chem.">
        <title>Autophosphorylation of a newly identified site of Aurora-B is indispensable for cytokinesis.</title>
        <authorList>
            <person name="Yasui Y."/>
            <person name="Urano T."/>
            <person name="Kawajiri A."/>
            <person name="Nagata K."/>
            <person name="Tatsuka M."/>
            <person name="Saya H."/>
            <person name="Furukawa K."/>
            <person name="Takahashi T."/>
            <person name="Izawa I."/>
            <person name="Inagaki M."/>
        </authorList>
    </citation>
    <scope>PHOSPHORYLATION AT THR-232</scope>
    <scope>FUNCTION</scope>
    <scope>INTERACTION WITH INCENP</scope>
    <scope>ACTIVITY REGULATION</scope>
    <scope>MUTAGENESIS OF LYS-106</scope>
</reference>
<reference key="24">
    <citation type="journal article" date="2004" name="J. Cell Sci.">
        <title>Bub1 is required for kinetochore localization of BubR1, Cenp-E, Cenp-F and Mad2, and chromosome congression.</title>
        <authorList>
            <person name="Johnson V.L."/>
            <person name="Scott M.I."/>
            <person name="Holt S.V."/>
            <person name="Hussein D."/>
            <person name="Taylor S.S."/>
        </authorList>
    </citation>
    <scope>FUNCTION</scope>
</reference>
<reference key="25">
    <citation type="journal article" date="2004" name="J. Cell Biol.">
        <title>Borealin: a novel chromosomal passenger required for stability of the bipolar mitotic spindle.</title>
        <authorList>
            <person name="Gassmann R."/>
            <person name="Carvalho A."/>
            <person name="Henzing A.J."/>
            <person name="Ruchaud S."/>
            <person name="Hudson D.F."/>
            <person name="Honda R."/>
            <person name="Nigg E.A."/>
            <person name="Gerloff D.L."/>
            <person name="Earnshaw W.C."/>
        </authorList>
    </citation>
    <scope>INTERACTION WITH CDCA8</scope>
    <scope>ACTIVITY REGULATION</scope>
    <scope>FUNCTION</scope>
</reference>
<reference key="26">
    <citation type="journal article" date="2004" name="Mol. Cell. Proteomics">
        <title>Identification of the substrates and interaction proteins of aurora kinases from a protein-protein interaction model.</title>
        <authorList>
            <person name="Tien A.-C."/>
            <person name="Lin M.-H."/>
            <person name="Su L.-J."/>
            <person name="Hong Y.-R."/>
            <person name="Cheng T.-S."/>
            <person name="Lee Y.-C.G."/>
            <person name="Lin W.-J."/>
            <person name="Still I.H."/>
            <person name="Huang C.-Y.F."/>
        </authorList>
    </citation>
    <scope>FUNCTION</scope>
    <scope>INTERACTION WITH CDCA1 AND NDC80</scope>
</reference>
<reference key="27">
    <citation type="journal article" date="2004" name="Oncogene">
        <title>Aurora B -TACC1 protein complex in cytokinesis.</title>
        <authorList>
            <person name="Delaval B."/>
            <person name="Ferrand A."/>
            <person name="Conte N."/>
            <person name="Larroque C."/>
            <person name="Hernandez-Verdun D."/>
            <person name="Prigent C."/>
            <person name="Birnbaum D."/>
        </authorList>
    </citation>
    <scope>INTERACTION WITH TACC1</scope>
</reference>
<reference key="28">
    <citation type="journal article" date="2005" name="Biochem. Biophys. Res. Commun.">
        <title>Septin1, a new interaction partner for human serine/threonine kinase aurora-B.</title>
        <authorList>
            <person name="Qi M."/>
            <person name="Yu W."/>
            <person name="Liu S."/>
            <person name="Jia H."/>
            <person name="Tang L."/>
            <person name="Shen M."/>
            <person name="Yan X."/>
            <person name="Saiyin H."/>
            <person name="Lang Q."/>
            <person name="Wan B."/>
            <person name="Zhao S."/>
            <person name="Yu L."/>
        </authorList>
    </citation>
    <scope>SUBCELLULAR LOCATION</scope>
    <scope>INTERACTION WITH SEPTIN1</scope>
    <scope>MUTAGENESIS OF LYS-106</scope>
</reference>
<reference key="29">
    <citation type="journal article" date="2005" name="J. Cell Biol.">
        <title>An ECT2-centralspindlin complex regulates the localization and function of RhoA.</title>
        <authorList>
            <person name="Yuce O."/>
            <person name="Piekny A."/>
            <person name="Glotzer M."/>
        </authorList>
    </citation>
    <scope>FUNCTION</scope>
</reference>
<reference key="30">
    <citation type="journal article" date="2006" name="Exp. Cell Res.">
        <title>EVI5 protein associates with the INCENP-aurora B kinase-survivin chromosomal passenger complex and is involved in the completion of cytokinesis.</title>
        <authorList>
            <person name="Faitar S.L."/>
            <person name="Sossey-Alaoui K."/>
            <person name="Ranalli T.A."/>
            <person name="Cowell J.K."/>
        </authorList>
    </citation>
    <scope>INTERACTION WITH EVI5</scope>
</reference>
<reference key="31">
    <citation type="journal article" date="2007" name="Cell Cycle">
        <title>Shugoshin 1 plays a central role in kinetochore assembly and is required for kinetochore targeting of Plk1.</title>
        <authorList>
            <person name="Pouwels J."/>
            <person name="Kukkonen A.M."/>
            <person name="Lan W."/>
            <person name="Daum J.R."/>
            <person name="Gorbsky G.J."/>
            <person name="Stukenberg T."/>
            <person name="Kallio M.J."/>
        </authorList>
    </citation>
    <scope>FUNCTION</scope>
</reference>
<reference key="32">
    <citation type="journal article" date="2007" name="Dev. Cell">
        <title>A Cul3-based E3 ligase removes Aurora B from mitotic chromosomes, regulating mitotic progression and completion of cytokinesis in human cells.</title>
        <authorList>
            <person name="Sumara I."/>
            <person name="Quadroni M."/>
            <person name="Frei C."/>
            <person name="Olma M.H."/>
            <person name="Sumara G."/>
            <person name="Ricci R."/>
            <person name="Peter M."/>
        </authorList>
    </citation>
    <scope>UBIQUITINATION</scope>
</reference>
<reference key="33">
    <citation type="journal article" date="2007" name="PLoS ONE">
        <title>Interphase nucleo-cytoplasmic shuttling and localization of SIRT2 during mitosis.</title>
        <authorList>
            <person name="North B.J."/>
            <person name="Verdin E."/>
        </authorList>
    </citation>
    <scope>INTERACTION WITH SIRT2</scope>
    <scope>SUBCELLULAR LOCATION</scope>
</reference>
<reference key="34">
    <citation type="journal article" date="2008" name="Mol. Cell">
        <title>Kinase-selective enrichment enables quantitative phosphoproteomics of the kinome across the cell cycle.</title>
        <authorList>
            <person name="Daub H."/>
            <person name="Olsen J.V."/>
            <person name="Bairlein M."/>
            <person name="Gnad F."/>
            <person name="Oppermann F.S."/>
            <person name="Korner R."/>
            <person name="Greff Z."/>
            <person name="Keri G."/>
            <person name="Stemmann O."/>
            <person name="Mann M."/>
        </authorList>
    </citation>
    <scope>IDENTIFICATION BY MASS SPECTROMETRY [LARGE SCALE ANALYSIS]</scope>
    <source>
        <tissue>Cervix carcinoma</tissue>
    </source>
</reference>
<reference key="35">
    <citation type="journal article" date="2008" name="Mol. Cell. Biol.">
        <title>A survivin-ran complex regulates spindle formation in tumor cells.</title>
        <authorList>
            <person name="Xia F."/>
            <person name="Canovas P.M."/>
            <person name="Guadagno T.M."/>
            <person name="Altieri D.C."/>
        </authorList>
    </citation>
    <scope>INTERACTION WITH BIRC5</scope>
</reference>
<reference key="36">
    <citation type="journal article" date="2008" name="Proc. Natl. Acad. Sci. U.S.A.">
        <title>A quantitative atlas of mitotic phosphorylation.</title>
        <authorList>
            <person name="Dephoure N."/>
            <person name="Zhou C."/>
            <person name="Villen J."/>
            <person name="Beausoleil S.A."/>
            <person name="Bakalarski C.E."/>
            <person name="Elledge S.J."/>
            <person name="Gygi S.P."/>
        </authorList>
    </citation>
    <scope>PHOSPHORYLATION [LARGE SCALE ANALYSIS] AT THR-35</scope>
    <scope>IDENTIFICATION BY MASS SPECTROMETRY [LARGE SCALE ANALYSIS]</scope>
    <source>
        <tissue>Cervix carcinoma</tissue>
    </source>
</reference>
<reference key="37">
    <citation type="journal article" date="2009" name="J. Cell Biol.">
        <title>The Cul3-KLHL21 E3 ubiquitin ligase targets aurora B to midzone microtubules in anaphase and is required for cytokinesis.</title>
        <authorList>
            <person name="Maerki S."/>
            <person name="Olma M.H."/>
            <person name="Staubli T."/>
            <person name="Steigemann P."/>
            <person name="Gerlich D.W."/>
            <person name="Quadroni M."/>
            <person name="Sumara I."/>
            <person name="Peter M."/>
        </authorList>
    </citation>
    <scope>UBIQUITINATION</scope>
</reference>
<reference key="38">
    <citation type="journal article" date="2009" name="Mol. Cell. Proteomics">
        <title>Large-scale proteomics analysis of the human kinome.</title>
        <authorList>
            <person name="Oppermann F.S."/>
            <person name="Gnad F."/>
            <person name="Olsen J.V."/>
            <person name="Hornberger R."/>
            <person name="Greff Z."/>
            <person name="Keri G."/>
            <person name="Mann M."/>
            <person name="Daub H."/>
        </authorList>
    </citation>
    <scope>IDENTIFICATION BY MASS SPECTROMETRY [LARGE SCALE ANALYSIS]</scope>
</reference>
<reference key="39">
    <citation type="journal article" date="2010" name="J. Cell Sci.">
        <title>RINGO C is required to sustain the spindle-assembly checkpoint.</title>
        <authorList>
            <person name="Mouron S."/>
            <person name="de Carcer G."/>
            <person name="Seco E."/>
            <person name="Fernandez-Miranda G."/>
            <person name="Malumbres M."/>
            <person name="Nebreda A.R."/>
        </authorList>
    </citation>
    <scope>INTERACTION WITH SPDYC</scope>
    <scope>SUBCELLULAR LOCATION</scope>
</reference>
<reference key="40">
    <citation type="journal article" date="2010" name="Nat. Cell Biol.">
        <title>Human POGZ modulates dissociation of HP1alpha from mitotic chromosome arms through Aurora B activation.</title>
        <authorList>
            <person name="Nozawa R.S."/>
            <person name="Nagao K."/>
            <person name="Masuda H.T."/>
            <person name="Iwasaki O."/>
            <person name="Hirota T."/>
            <person name="Nozaki N."/>
            <person name="Kimura H."/>
            <person name="Obuse C."/>
        </authorList>
    </citation>
    <scope>INTERACTION WITH INCENP</scope>
</reference>
<reference key="41">
    <citation type="journal article" date="2010" name="Sci. Signal.">
        <title>Quantitative phosphoproteomics reveals widespread full phosphorylation site occupancy during mitosis.</title>
        <authorList>
            <person name="Olsen J.V."/>
            <person name="Vermeulen M."/>
            <person name="Santamaria A."/>
            <person name="Kumar C."/>
            <person name="Miller M.L."/>
            <person name="Jensen L.J."/>
            <person name="Gnad F."/>
            <person name="Cox J."/>
            <person name="Jensen T.S."/>
            <person name="Nigg E.A."/>
            <person name="Brunak S."/>
            <person name="Mann M."/>
        </authorList>
    </citation>
    <scope>PHOSPHORYLATION [LARGE SCALE ANALYSIS] AT SER-62 AND THR-64</scope>
    <scope>IDENTIFICATION BY MASS SPECTROMETRY [LARGE SCALE ANALYSIS]</scope>
    <source>
        <tissue>Cervix carcinoma</tissue>
    </source>
</reference>
<reference key="42">
    <citation type="journal article" date="2010" name="Science">
        <title>Two histone marks establish the inner centromere and chromosome bi-orientation.</title>
        <authorList>
            <person name="Yamagishi Y."/>
            <person name="Honda T."/>
            <person name="Tanno Y."/>
            <person name="Watanabe Y."/>
        </authorList>
    </citation>
    <scope>SUBCELLULAR LOCATION</scope>
</reference>
<reference key="43">
    <citation type="journal article" date="2011" name="BMC Syst. Biol.">
        <title>Initial characterization of the human central proteome.</title>
        <authorList>
            <person name="Burkard T.R."/>
            <person name="Planyavsky M."/>
            <person name="Kaupe I."/>
            <person name="Breitwieser F.P."/>
            <person name="Buerckstuemmer T."/>
            <person name="Bennett K.L."/>
            <person name="Superti-Furga G."/>
            <person name="Colinge J."/>
        </authorList>
    </citation>
    <scope>IDENTIFICATION BY MASS SPECTROMETRY [LARGE SCALE ANALYSIS]</scope>
</reference>
<reference key="44">
    <citation type="journal article" date="2011" name="Curr. Biol.">
        <title>A positive feedback loop involving Haspin and Aurora B promotes CPC accumulation at centromeres in mitosis.</title>
        <authorList>
            <person name="Wang F."/>
            <person name="Ulyanova N.P."/>
            <person name="van der Waal M.S."/>
            <person name="Patnaik D."/>
            <person name="Lens S.M."/>
            <person name="Higgins J.M."/>
        </authorList>
    </citation>
    <scope>FUNCTION IN PHOSPHORYLATION OF HASPIN</scope>
</reference>
<reference key="45">
    <citation type="journal article" date="2011" name="J. Biol. Chem.">
        <title>Aurora B interacts with NIR-p53, leading to p53 phosphorylation in its DNA-binding domain and subsequent functional suppression.</title>
        <authorList>
            <person name="Wu L."/>
            <person name="Ma C.A."/>
            <person name="Zhao Y."/>
            <person name="Jain A."/>
        </authorList>
    </citation>
    <scope>FUNCTION IN PHOSPHORYLATION OF TP53</scope>
    <scope>INTERACTION WITH NOC2L AND TP53</scope>
    <scope>SUBCELLULAR LOCATION</scope>
</reference>
<reference key="46">
    <citation type="journal article" date="2011" name="Int. J. Oncol.">
        <title>PAR, a protein involved in the cell cycle, is functionally related to chromosomal passenger proteins.</title>
        <authorList>
            <person name="Platica M."/>
            <person name="Ionescu A."/>
            <person name="Ivan E."/>
            <person name="Holland J.F."/>
            <person name="Mandeli J."/>
            <person name="Platica O."/>
        </authorList>
    </citation>
    <scope>INTERACTION WITH JTB</scope>
</reference>
<reference key="47">
    <citation type="journal article" date="2012" name="Gene">
        <title>A novel big protein TPRBK possessing 25 units of TPR motif is essential for the progress of mitosis and cytokinesis.</title>
        <authorList>
            <person name="Izumiyama T."/>
            <person name="Minoshima S."/>
            <person name="Yoshida T."/>
            <person name="Shimizu N."/>
        </authorList>
    </citation>
    <scope>INTERACTION WITH TTC28</scope>
    <scope>SUBCELLULAR LOCATION</scope>
</reference>
<reference key="48">
    <citation type="journal article" date="2012" name="Science">
        <title>ESCRT-III governs the Aurora B-mediated abscission checkpoint through CHMP4C.</title>
        <authorList>
            <person name="Carlton J.G."/>
            <person name="Caballe A."/>
            <person name="Agromayor M."/>
            <person name="Kloc M."/>
            <person name="Martin-Serrano J."/>
        </authorList>
    </citation>
    <scope>FUNCTION</scope>
</reference>
<reference key="49">
    <citation type="journal article" date="2013" name="J. Proteome Res.">
        <title>Toward a comprehensive characterization of a human cancer cell phosphoproteome.</title>
        <authorList>
            <person name="Zhou H."/>
            <person name="Di Palma S."/>
            <person name="Preisinger C."/>
            <person name="Peng M."/>
            <person name="Polat A.N."/>
            <person name="Heck A.J."/>
            <person name="Mohammed S."/>
        </authorList>
    </citation>
    <scope>PHOSPHORYLATION [LARGE SCALE ANALYSIS] AT SER-227</scope>
    <scope>IDENTIFICATION BY MASS SPECTROMETRY [LARGE SCALE ANALYSIS]</scope>
    <source>
        <tissue>Cervix carcinoma</tissue>
        <tissue>Erythroleukemia</tissue>
    </source>
</reference>
<reference key="50">
    <citation type="journal article" date="2014" name="Nat. Cell Biol.">
        <title>ANCHR mediates Aurora-B-dependent abscission checkpoint control through retention of VPS4.</title>
        <authorList>
            <person name="Thoresen S.B."/>
            <person name="Campsteijn C."/>
            <person name="Vietri M."/>
            <person name="Schink K.O."/>
            <person name="Liestoel K."/>
            <person name="Andersen J.S."/>
            <person name="Raiborg C."/>
            <person name="Stenmark H."/>
        </authorList>
    </citation>
    <scope>FUNCTION</scope>
</reference>
<reference key="51">
    <citation type="journal article" date="2015" name="Sci. Rep.">
        <title>Aurora B-dependent phosphorylation of Ataxin-10 promotes the interaction between Ataxin-10 and Plk1 in cytokinesis.</title>
        <authorList>
            <person name="Tian J."/>
            <person name="Tian C."/>
            <person name="Ding Y."/>
            <person name="Li Z."/>
            <person name="Geng Q."/>
            <person name="Xiahou Z."/>
            <person name="Wang J."/>
            <person name="Hou W."/>
            <person name="Liao J."/>
            <person name="Dong M.Q."/>
            <person name="Xu X."/>
            <person name="Li J."/>
        </authorList>
    </citation>
    <scope>FUNCTION</scope>
    <scope>CATALYTIC ACTIVITY</scope>
    <scope>ACTIVITY REGULATION</scope>
</reference>
<reference key="52">
    <citation type="journal article" date="2016" name="Nat. Chem. Biol.">
        <title>Acetylation of Aurora B by TIP60 ensures accurate chromosomal segregation.</title>
        <authorList>
            <person name="Mo F."/>
            <person name="Zhuang X."/>
            <person name="Liu X."/>
            <person name="Yao P.Y."/>
            <person name="Qin B."/>
            <person name="Su Z."/>
            <person name="Zang J."/>
            <person name="Wang Z."/>
            <person name="Zhang J."/>
            <person name="Dou Z."/>
            <person name="Tian C."/>
            <person name="Teng M."/>
            <person name="Niu L."/>
            <person name="Hill D.L."/>
            <person name="Fang G."/>
            <person name="Ding X."/>
            <person name="Fu C."/>
            <person name="Yao X."/>
        </authorList>
    </citation>
    <scope>FUNCTION</scope>
    <scope>CATALYTIC ACTIVITY</scope>
    <scope>SUBCELLULAR LOCATION</scope>
    <scope>PHOSPHORYLATION AT THR-232</scope>
    <scope>ACETYLATION AT LYS-215</scope>
    <scope>MUTAGENESIS OF LYS-215</scope>
</reference>
<reference key="53">
    <citation type="journal article" date="2016" name="PLoS ONE">
        <title>Aurora-C interactions with survivin and INCENP reveal shared and distinct features compared with Aurora-B chromosome passenger protein complex.</title>
        <authorList>
            <person name="Sasai K."/>
            <person name="Katayama H."/>
            <person name="Hawke D.H."/>
            <person name="Sen S."/>
        </authorList>
    </citation>
    <scope>SUBUNIT</scope>
</reference>
<reference key="54">
    <citation type="journal article" date="2018" name="Nat. Commun.">
        <title>USP35 regulates mitotic progression by modulating the stability of Aurora B.</title>
        <authorList>
            <person name="Park J."/>
            <person name="Kwon M.S."/>
            <person name="Kim E.E."/>
            <person name="Lee H."/>
            <person name="Song E.J."/>
        </authorList>
    </citation>
    <scope>FUNCTION</scope>
    <scope>DEUBIQUITINATION BY USP35</scope>
</reference>
<reference key="55">
    <citation type="journal article" date="2021" name="Science">
        <title>Phosphorylation and chromatin tethering prevent cGAS activation during mitosis.</title>
        <authorList>
            <person name="Li T."/>
            <person name="Huang T."/>
            <person name="Du M."/>
            <person name="Chen X."/>
            <person name="Du F."/>
            <person name="Ren J."/>
            <person name="Chen Z.J."/>
        </authorList>
    </citation>
    <scope>FUNCTION</scope>
    <scope>CATALYTIC ACTIVITY</scope>
</reference>
<reference key="56">
    <citation type="journal article" date="2012" name="J. Med. Chem.">
        <title>Crystal structure of human aurora B in complex with INCENP and VX-680.</title>
        <authorList>
            <person name="Elkins J.M."/>
            <person name="Santaguida S."/>
            <person name="Musacchio A."/>
            <person name="Knapp S."/>
        </authorList>
    </citation>
    <scope>X-RAY CRYSTALLOGRAPHY (2.75 ANGSTROMS) OF 55-344 IN COMPLEX WITH INCENP</scope>
</reference>
<reference key="57">
    <citation type="journal article" date="2007" name="Cancer Lett.">
        <title>Aurora kinases A and B and familial breast cancer risk.</title>
        <authorList>
            <person name="Tchatchou S."/>
            <person name="Wirtenberger M."/>
            <person name="Hemminki K."/>
            <person name="Sutter C."/>
            <person name="Meindl A."/>
            <person name="Wappenschmidt B."/>
            <person name="Kiechle M."/>
            <person name="Bugert P."/>
            <person name="Schmutzler R.K."/>
            <person name="Bartram C.R."/>
            <person name="Burwinkel B."/>
        </authorList>
    </citation>
    <scope>VARIANT THR-298</scope>
</reference>
<reference key="58">
    <citation type="journal article" date="2007" name="Nature">
        <title>Patterns of somatic mutation in human cancer genomes.</title>
        <authorList>
            <person name="Greenman C."/>
            <person name="Stephens P."/>
            <person name="Smith R."/>
            <person name="Dalgliesh G.L."/>
            <person name="Hunter C."/>
            <person name="Bignell G."/>
            <person name="Davies H."/>
            <person name="Teague J."/>
            <person name="Butler A."/>
            <person name="Stevens C."/>
            <person name="Edkins S."/>
            <person name="O'Meara S."/>
            <person name="Vastrik I."/>
            <person name="Schmidt E.E."/>
            <person name="Avis T."/>
            <person name="Barthorpe S."/>
            <person name="Bhamra G."/>
            <person name="Buck G."/>
            <person name="Choudhury B."/>
            <person name="Clements J."/>
            <person name="Cole J."/>
            <person name="Dicks E."/>
            <person name="Forbes S."/>
            <person name="Gray K."/>
            <person name="Halliday K."/>
            <person name="Harrison R."/>
            <person name="Hills K."/>
            <person name="Hinton J."/>
            <person name="Jenkinson A."/>
            <person name="Jones D."/>
            <person name="Menzies A."/>
            <person name="Mironenko T."/>
            <person name="Perry J."/>
            <person name="Raine K."/>
            <person name="Richardson D."/>
            <person name="Shepherd R."/>
            <person name="Small A."/>
            <person name="Tofts C."/>
            <person name="Varian J."/>
            <person name="Webb T."/>
            <person name="West S."/>
            <person name="Widaa S."/>
            <person name="Yates A."/>
            <person name="Cahill D.P."/>
            <person name="Louis D.N."/>
            <person name="Goldstraw P."/>
            <person name="Nicholson A.G."/>
            <person name="Brasseur F."/>
            <person name="Looijenga L."/>
            <person name="Weber B.L."/>
            <person name="Chiew Y.-E."/>
            <person name="DeFazio A."/>
            <person name="Greaves M.F."/>
            <person name="Green A.R."/>
            <person name="Campbell P."/>
            <person name="Birney E."/>
            <person name="Easton D.F."/>
            <person name="Chenevix-Trench G."/>
            <person name="Tan M.-H."/>
            <person name="Khoo S.K."/>
            <person name="Teh B.T."/>
            <person name="Yuen S.T."/>
            <person name="Leung S.Y."/>
            <person name="Wooster R."/>
            <person name="Futreal P.A."/>
            <person name="Stratton M.R."/>
        </authorList>
    </citation>
    <scope>VARIANTS [LARGE SCALE ANALYSIS] VAL-52 AND MET-179</scope>
</reference>
<dbReference type="EC" id="2.7.11.1" evidence="8 9 17 42 43 46"/>
<dbReference type="EMBL" id="AF008552">
    <property type="protein sequence ID" value="AAC12709.1"/>
    <property type="molecule type" value="mRNA"/>
</dbReference>
<dbReference type="EMBL" id="AB011450">
    <property type="protein sequence ID" value="BAA32136.1"/>
    <property type="molecule type" value="mRNA"/>
</dbReference>
<dbReference type="EMBL" id="AB011446">
    <property type="protein sequence ID" value="BAA82709.1"/>
    <property type="molecule type" value="mRNA"/>
</dbReference>
<dbReference type="EMBL" id="AF004022">
    <property type="protein sequence ID" value="AAB65786.1"/>
    <property type="molecule type" value="mRNA"/>
</dbReference>
<dbReference type="EMBL" id="AF015254">
    <property type="protein sequence ID" value="AAC98891.1"/>
    <property type="molecule type" value="mRNA"/>
</dbReference>
<dbReference type="EMBL" id="AB519677">
    <property type="protein sequence ID" value="BAI23190.1"/>
    <property type="molecule type" value="mRNA"/>
</dbReference>
<dbReference type="EMBL" id="AB519678">
    <property type="protein sequence ID" value="BAI23191.1"/>
    <property type="molecule type" value="mRNA"/>
</dbReference>
<dbReference type="EMBL" id="AB519679">
    <property type="protein sequence ID" value="BAI23192.1"/>
    <property type="molecule type" value="mRNA"/>
</dbReference>
<dbReference type="EMBL" id="BT019534">
    <property type="protein sequence ID" value="AAV38341.1"/>
    <property type="molecule type" value="mRNA"/>
</dbReference>
<dbReference type="EMBL" id="AK297976">
    <property type="protein sequence ID" value="BAG60286.1"/>
    <property type="molecule type" value="mRNA"/>
</dbReference>
<dbReference type="EMBL" id="AC135178">
    <property type="status" value="NOT_ANNOTATED_CDS"/>
    <property type="molecule type" value="Genomic_DNA"/>
</dbReference>
<dbReference type="EMBL" id="CH471108">
    <property type="protein sequence ID" value="EAW90075.1"/>
    <property type="molecule type" value="Genomic_DNA"/>
</dbReference>
<dbReference type="EMBL" id="CH471108">
    <property type="protein sequence ID" value="EAW90077.1"/>
    <property type="molecule type" value="Genomic_DNA"/>
</dbReference>
<dbReference type="EMBL" id="CH471108">
    <property type="protein sequence ID" value="EAW90078.1"/>
    <property type="molecule type" value="Genomic_DNA"/>
</dbReference>
<dbReference type="EMBL" id="BC000442">
    <property type="protein sequence ID" value="AAH00442.3"/>
    <property type="molecule type" value="mRNA"/>
</dbReference>
<dbReference type="EMBL" id="BC009751">
    <property type="protein sequence ID" value="AAH09751.1"/>
    <property type="molecule type" value="mRNA"/>
</dbReference>
<dbReference type="EMBL" id="BC013300">
    <property type="protein sequence ID" value="AAH13300.2"/>
    <property type="status" value="ALT_INIT"/>
    <property type="molecule type" value="mRNA"/>
</dbReference>
<dbReference type="EMBL" id="BC080581">
    <property type="protein sequence ID" value="AAH80581.1"/>
    <property type="molecule type" value="mRNA"/>
</dbReference>
<dbReference type="CCDS" id="CCDS11134.1">
    <molecule id="Q96GD4-1"/>
</dbReference>
<dbReference type="CCDS" id="CCDS58514.1">
    <molecule id="Q96GD4-4"/>
</dbReference>
<dbReference type="CCDS" id="CCDS67162.1">
    <molecule id="Q96GD4-5"/>
</dbReference>
<dbReference type="CCDS" id="CCDS82065.1">
    <molecule id="Q96GD4-2"/>
</dbReference>
<dbReference type="RefSeq" id="NP_001243763.1">
    <molecule id="Q96GD4-4"/>
    <property type="nucleotide sequence ID" value="NM_001256834.3"/>
</dbReference>
<dbReference type="RefSeq" id="NP_001271455.1">
    <molecule id="Q96GD4-5"/>
    <property type="nucleotide sequence ID" value="NM_001284526.2"/>
</dbReference>
<dbReference type="RefSeq" id="NP_001300879.1">
    <molecule id="Q96GD4-1"/>
    <property type="nucleotide sequence ID" value="NM_001313950.2"/>
</dbReference>
<dbReference type="RefSeq" id="NP_001300880.1">
    <molecule id="Q96GD4-4"/>
    <property type="nucleotide sequence ID" value="NM_001313951.1"/>
</dbReference>
<dbReference type="RefSeq" id="NP_001300881.1">
    <property type="nucleotide sequence ID" value="NM_001313952.1"/>
</dbReference>
<dbReference type="RefSeq" id="NP_001300882.1">
    <molecule id="Q96GD4-2"/>
    <property type="nucleotide sequence ID" value="NM_001313953.3"/>
</dbReference>
<dbReference type="RefSeq" id="NP_001300883.1">
    <property type="nucleotide sequence ID" value="NM_001313954.1"/>
</dbReference>
<dbReference type="RefSeq" id="NP_001300884.1">
    <property type="nucleotide sequence ID" value="NM_001313955.1"/>
</dbReference>
<dbReference type="RefSeq" id="NP_004208.2">
    <molecule id="Q96GD4-1"/>
    <property type="nucleotide sequence ID" value="NM_004217.4"/>
</dbReference>
<dbReference type="RefSeq" id="XP_011522372.1">
    <property type="nucleotide sequence ID" value="XM_011524070.2"/>
</dbReference>
<dbReference type="RefSeq" id="XP_011522374.1">
    <molecule id="Q96GD4-4"/>
    <property type="nucleotide sequence ID" value="XM_011524072.4"/>
</dbReference>
<dbReference type="RefSeq" id="XP_016880796.1">
    <property type="nucleotide sequence ID" value="XM_017025307.1"/>
</dbReference>
<dbReference type="RefSeq" id="XP_047293006.1">
    <molecule id="Q96GD4-4"/>
    <property type="nucleotide sequence ID" value="XM_047437050.1"/>
</dbReference>
<dbReference type="PDB" id="4AF3">
    <property type="method" value="X-ray"/>
    <property type="resolution" value="2.75 A"/>
    <property type="chains" value="A=55-344"/>
</dbReference>
<dbReference type="PDBsum" id="4AF3"/>
<dbReference type="SMR" id="Q96GD4"/>
<dbReference type="BioGRID" id="114646">
    <property type="interactions" value="834"/>
</dbReference>
<dbReference type="ComplexPortal" id="CPX-116">
    <property type="entry name" value="Chromosomal passenger complex"/>
</dbReference>
<dbReference type="CORUM" id="Q96GD4"/>
<dbReference type="DIP" id="DIP-34530N"/>
<dbReference type="ELM" id="Q96GD4"/>
<dbReference type="FunCoup" id="Q96GD4">
    <property type="interactions" value="1458"/>
</dbReference>
<dbReference type="IntAct" id="Q96GD4">
    <property type="interactions" value="230"/>
</dbReference>
<dbReference type="MINT" id="Q96GD4"/>
<dbReference type="STRING" id="9606.ENSP00000313950"/>
<dbReference type="BindingDB" id="Q96GD4"/>
<dbReference type="ChEMBL" id="CHEMBL2185"/>
<dbReference type="DrugBank" id="DB08039">
    <property type="generic name" value="(3Z)-N,N-DIMETHYL-2-OXO-3-(4,5,6,7-TETRAHYDRO-1H-INDOL-2-YLMETHYLIDENE)-2,3-DIHYDRO-1H-INDOLE-5-SULFONAMIDE"/>
</dbReference>
<dbReference type="DrugBank" id="DB17197">
    <property type="generic name" value="AMG-900"/>
</dbReference>
<dbReference type="DrugBank" id="DB05169">
    <property type="generic name" value="AT9283"/>
</dbReference>
<dbReference type="DrugBank" id="DB06347">
    <property type="generic name" value="Cenisertib"/>
</dbReference>
<dbReference type="DrugBank" id="DB11778">
    <property type="generic name" value="Danusertib"/>
</dbReference>
<dbReference type="DrugBank" id="DB06486">
    <property type="generic name" value="Enzastaurin"/>
</dbReference>
<dbReference type="DrugBank" id="DB12010">
    <property type="generic name" value="Fostamatinib"/>
</dbReference>
<dbReference type="DrugBank" id="DB04703">
    <property type="generic name" value="Hesperidin"/>
</dbReference>
<dbReference type="DrugBank" id="DB11694">
    <property type="generic name" value="Ilorasertib"/>
</dbReference>
<dbReference type="DrugBank" id="DB12556">
    <property type="generic name" value="MK-5108"/>
</dbReference>
<dbReference type="DrugBank" id="DB12072">
    <property type="generic name" value="Orantinib"/>
</dbReference>
<dbReference type="DrugBank" id="DB13059">
    <property type="generic name" value="PF-03814735"/>
</dbReference>
<dbReference type="DrugBank" id="DB07340">
    <property type="generic name" value="Reversine"/>
</dbReference>
<dbReference type="DrugBank" id="DB06134">
    <property type="generic name" value="SNS-314"/>
</dbReference>
<dbReference type="DrugBank" id="DB12756">
    <property type="generic name" value="TAK-901"/>
</dbReference>
<dbReference type="DrugCentral" id="Q96GD4"/>
<dbReference type="GuidetoPHARMACOLOGY" id="1937"/>
<dbReference type="GlyGen" id="Q96GD4">
    <property type="glycosylation" value="3 sites, 1 N-linked glycan (1 site), 1 O-linked glycan (1 site)"/>
</dbReference>
<dbReference type="iPTMnet" id="Q96GD4"/>
<dbReference type="MetOSite" id="Q96GD4"/>
<dbReference type="PhosphoSitePlus" id="Q96GD4"/>
<dbReference type="SwissPalm" id="Q96GD4"/>
<dbReference type="BioMuta" id="AURKB"/>
<dbReference type="DMDM" id="317373473"/>
<dbReference type="CPTAC" id="CPTAC-1219"/>
<dbReference type="CPTAC" id="CPTAC-1228"/>
<dbReference type="CPTAC" id="CPTAC-1340"/>
<dbReference type="CPTAC" id="CPTAC-3030"/>
<dbReference type="CPTAC" id="CPTAC-3031"/>
<dbReference type="jPOST" id="Q96GD4"/>
<dbReference type="MassIVE" id="Q96GD4"/>
<dbReference type="PaxDb" id="9606-ENSP00000313950"/>
<dbReference type="PeptideAtlas" id="Q96GD4"/>
<dbReference type="ProteomicsDB" id="4709"/>
<dbReference type="ProteomicsDB" id="7611"/>
<dbReference type="ProteomicsDB" id="76623">
    <molecule id="Q96GD4-1"/>
</dbReference>
<dbReference type="Pumba" id="Q96GD4"/>
<dbReference type="ABCD" id="Q96GD4">
    <property type="antibodies" value="10 sequenced antibodies"/>
</dbReference>
<dbReference type="Antibodypedia" id="3128">
    <property type="antibodies" value="1163 antibodies from 47 providers"/>
</dbReference>
<dbReference type="DNASU" id="9212"/>
<dbReference type="Ensembl" id="ENST00000316199.10">
    <molecule id="Q96GD4-5"/>
    <property type="protein sequence ID" value="ENSP00000313950.6"/>
    <property type="gene ID" value="ENSG00000178999.13"/>
</dbReference>
<dbReference type="Ensembl" id="ENST00000534871.5">
    <molecule id="Q96GD4-4"/>
    <property type="protein sequence ID" value="ENSP00000443869.1"/>
    <property type="gene ID" value="ENSG00000178999.13"/>
</dbReference>
<dbReference type="Ensembl" id="ENST00000578549.5">
    <molecule id="Q96GD4-2"/>
    <property type="protein sequence ID" value="ENSP00000462207.1"/>
    <property type="gene ID" value="ENSG00000178999.13"/>
</dbReference>
<dbReference type="Ensembl" id="ENST00000585124.6">
    <molecule id="Q96GD4-1"/>
    <property type="protein sequence ID" value="ENSP00000463999.1"/>
    <property type="gene ID" value="ENSG00000178999.13"/>
</dbReference>
<dbReference type="GeneID" id="9212"/>
<dbReference type="KEGG" id="hsa:9212"/>
<dbReference type="MANE-Select" id="ENST00000585124.6">
    <property type="protein sequence ID" value="ENSP00000463999.1"/>
    <property type="RefSeq nucleotide sequence ID" value="NM_004217.4"/>
    <property type="RefSeq protein sequence ID" value="NP_004208.2"/>
</dbReference>
<dbReference type="UCSC" id="uc002gkm.5">
    <molecule id="Q96GD4-1"/>
    <property type="organism name" value="human"/>
</dbReference>
<dbReference type="AGR" id="HGNC:11390"/>
<dbReference type="CTD" id="9212"/>
<dbReference type="DisGeNET" id="9212"/>
<dbReference type="GeneCards" id="AURKB"/>
<dbReference type="HGNC" id="HGNC:11390">
    <property type="gene designation" value="AURKB"/>
</dbReference>
<dbReference type="HPA" id="ENSG00000178999">
    <property type="expression patterns" value="Tissue enhanced (bone marrow, lymphoid tissue)"/>
</dbReference>
<dbReference type="MalaCards" id="AURKB"/>
<dbReference type="MIM" id="604970">
    <property type="type" value="gene"/>
</dbReference>
<dbReference type="neXtProt" id="NX_Q96GD4"/>
<dbReference type="OpenTargets" id="ENSG00000178999"/>
<dbReference type="PharmGKB" id="PA36199"/>
<dbReference type="VEuPathDB" id="HostDB:ENSG00000178999"/>
<dbReference type="eggNOG" id="KOG0580">
    <property type="taxonomic scope" value="Eukaryota"/>
</dbReference>
<dbReference type="GeneTree" id="ENSGT00940000158980"/>
<dbReference type="InParanoid" id="Q96GD4"/>
<dbReference type="OMA" id="KNRPCIK"/>
<dbReference type="OrthoDB" id="377346at2759"/>
<dbReference type="PAN-GO" id="Q96GD4">
    <property type="GO annotations" value="7 GO annotations based on evolutionary models"/>
</dbReference>
<dbReference type="PhylomeDB" id="Q96GD4"/>
<dbReference type="TreeFam" id="TF351439"/>
<dbReference type="PathwayCommons" id="Q96GD4"/>
<dbReference type="Reactome" id="R-HSA-141444">
    <property type="pathway name" value="Amplification of signal from unattached kinetochores via a MAD2 inhibitory signal"/>
</dbReference>
<dbReference type="Reactome" id="R-HSA-174178">
    <property type="pathway name" value="APC/C:Cdh1 mediated degradation of Cdc20 and other APC/C:Cdh1 targeted proteins in late mitosis/early G1"/>
</dbReference>
<dbReference type="Reactome" id="R-HSA-2467813">
    <property type="pathway name" value="Separation of Sister Chromatids"/>
</dbReference>
<dbReference type="Reactome" id="R-HSA-2500257">
    <property type="pathway name" value="Resolution of Sister Chromatid Cohesion"/>
</dbReference>
<dbReference type="Reactome" id="R-HSA-4615885">
    <property type="pathway name" value="SUMOylation of DNA replication proteins"/>
</dbReference>
<dbReference type="Reactome" id="R-HSA-5663220">
    <property type="pathway name" value="RHO GTPases Activate Formins"/>
</dbReference>
<dbReference type="Reactome" id="R-HSA-6804756">
    <property type="pathway name" value="Regulation of TP53 Activity through Phosphorylation"/>
</dbReference>
<dbReference type="Reactome" id="R-HSA-68877">
    <property type="pathway name" value="Mitotic Prometaphase"/>
</dbReference>
<dbReference type="Reactome" id="R-HSA-9022692">
    <property type="pathway name" value="Regulation of MECP2 expression and activity"/>
</dbReference>
<dbReference type="Reactome" id="R-HSA-9648025">
    <property type="pathway name" value="EML4 and NUDC in mitotic spindle formation"/>
</dbReference>
<dbReference type="SignaLink" id="Q96GD4"/>
<dbReference type="SIGNOR" id="Q96GD4"/>
<dbReference type="BioGRID-ORCS" id="9212">
    <property type="hits" value="863 hits in 1220 CRISPR screens"/>
</dbReference>
<dbReference type="CD-CODE" id="91857CE7">
    <property type="entry name" value="Nucleolus"/>
</dbReference>
<dbReference type="EvolutionaryTrace" id="Q96GD4"/>
<dbReference type="GeneWiki" id="Aurora_B_kinase"/>
<dbReference type="GenomeRNAi" id="9212"/>
<dbReference type="Pharos" id="Q96GD4">
    <property type="development level" value="Tchem"/>
</dbReference>
<dbReference type="PRO" id="PR:Q96GD4"/>
<dbReference type="Proteomes" id="UP000005640">
    <property type="component" value="Chromosome 17"/>
</dbReference>
<dbReference type="RNAct" id="Q96GD4">
    <property type="molecule type" value="protein"/>
</dbReference>
<dbReference type="Bgee" id="ENSG00000178999">
    <property type="expression patterns" value="Expressed in ventricular zone and 125 other cell types or tissues"/>
</dbReference>
<dbReference type="ExpressionAtlas" id="Q96GD4">
    <property type="expression patterns" value="baseline and differential"/>
</dbReference>
<dbReference type="GO" id="GO:0005813">
    <property type="term" value="C:centrosome"/>
    <property type="evidence" value="ECO:0000318"/>
    <property type="project" value="GO_Central"/>
</dbReference>
<dbReference type="GO" id="GO:0010369">
    <property type="term" value="C:chromocenter"/>
    <property type="evidence" value="ECO:0007669"/>
    <property type="project" value="Ensembl"/>
</dbReference>
<dbReference type="GO" id="GO:0032133">
    <property type="term" value="C:chromosome passenger complex"/>
    <property type="evidence" value="ECO:0000353"/>
    <property type="project" value="UniProtKB"/>
</dbReference>
<dbReference type="GO" id="GO:0000779">
    <property type="term" value="C:condensed chromosome, centromeric region"/>
    <property type="evidence" value="ECO:0000314"/>
    <property type="project" value="UniProtKB"/>
</dbReference>
<dbReference type="GO" id="GO:0005829">
    <property type="term" value="C:cytosol"/>
    <property type="evidence" value="ECO:0000304"/>
    <property type="project" value="Reactome"/>
</dbReference>
<dbReference type="GO" id="GO:0000776">
    <property type="term" value="C:kinetochore"/>
    <property type="evidence" value="ECO:0000314"/>
    <property type="project" value="UniProtKB"/>
</dbReference>
<dbReference type="GO" id="GO:0015630">
    <property type="term" value="C:microtubule cytoskeleton"/>
    <property type="evidence" value="ECO:0000314"/>
    <property type="project" value="ComplexPortal"/>
</dbReference>
<dbReference type="GO" id="GO:0030496">
    <property type="term" value="C:midbody"/>
    <property type="evidence" value="ECO:0000314"/>
    <property type="project" value="HPA"/>
</dbReference>
<dbReference type="GO" id="GO:1990023">
    <property type="term" value="C:mitotic spindle midzone"/>
    <property type="evidence" value="ECO:0007669"/>
    <property type="project" value="Ensembl"/>
</dbReference>
<dbReference type="GO" id="GO:0097431">
    <property type="term" value="C:mitotic spindle pole"/>
    <property type="evidence" value="ECO:0007669"/>
    <property type="project" value="Ensembl"/>
</dbReference>
<dbReference type="GO" id="GO:0005654">
    <property type="term" value="C:nucleoplasm"/>
    <property type="evidence" value="ECO:0000314"/>
    <property type="project" value="HPA"/>
</dbReference>
<dbReference type="GO" id="GO:0005634">
    <property type="term" value="C:nucleus"/>
    <property type="evidence" value="ECO:0000314"/>
    <property type="project" value="UniProtKB"/>
</dbReference>
<dbReference type="GO" id="GO:0005819">
    <property type="term" value="C:spindle"/>
    <property type="evidence" value="ECO:0000304"/>
    <property type="project" value="UniProtKB"/>
</dbReference>
<dbReference type="GO" id="GO:0005876">
    <property type="term" value="C:spindle microtubule"/>
    <property type="evidence" value="ECO:0000318"/>
    <property type="project" value="GO_Central"/>
</dbReference>
<dbReference type="GO" id="GO:0051233">
    <property type="term" value="C:spindle midzone"/>
    <property type="evidence" value="ECO:0000318"/>
    <property type="project" value="GO_Central"/>
</dbReference>
<dbReference type="GO" id="GO:0000922">
    <property type="term" value="C:spindle pole"/>
    <property type="evidence" value="ECO:0000318"/>
    <property type="project" value="GO_Central"/>
</dbReference>
<dbReference type="GO" id="GO:0005524">
    <property type="term" value="F:ATP binding"/>
    <property type="evidence" value="ECO:0007669"/>
    <property type="project" value="UniProtKB-KW"/>
</dbReference>
<dbReference type="GO" id="GO:0019900">
    <property type="term" value="F:kinase binding"/>
    <property type="evidence" value="ECO:0000353"/>
    <property type="project" value="UniProtKB"/>
</dbReference>
<dbReference type="GO" id="GO:0106310">
    <property type="term" value="F:protein serine kinase activity"/>
    <property type="evidence" value="ECO:0007669"/>
    <property type="project" value="RHEA"/>
</dbReference>
<dbReference type="GO" id="GO:0004674">
    <property type="term" value="F:protein serine/threonine kinase activity"/>
    <property type="evidence" value="ECO:0000314"/>
    <property type="project" value="UniProtKB"/>
</dbReference>
<dbReference type="GO" id="GO:0004712">
    <property type="term" value="F:protein serine/threonine/tyrosine kinase activity"/>
    <property type="evidence" value="ECO:0000304"/>
    <property type="project" value="UniProtKB"/>
</dbReference>
<dbReference type="GO" id="GO:0044839">
    <property type="term" value="P:cell cycle G2/M phase transition"/>
    <property type="evidence" value="ECO:0000314"/>
    <property type="project" value="UniProt"/>
</dbReference>
<dbReference type="GO" id="GO:0034644">
    <property type="term" value="P:cellular response to UV"/>
    <property type="evidence" value="ECO:0000314"/>
    <property type="project" value="UniProtKB"/>
</dbReference>
<dbReference type="GO" id="GO:0036089">
    <property type="term" value="P:cleavage furrow formation"/>
    <property type="evidence" value="ECO:0000314"/>
    <property type="project" value="UniProtKB"/>
</dbReference>
<dbReference type="GO" id="GO:0061952">
    <property type="term" value="P:midbody abscission"/>
    <property type="evidence" value="ECO:0000250"/>
    <property type="project" value="UniProtKB"/>
</dbReference>
<dbReference type="GO" id="GO:0000278">
    <property type="term" value="P:mitotic cell cycle"/>
    <property type="evidence" value="ECO:0000303"/>
    <property type="project" value="ComplexPortal"/>
</dbReference>
<dbReference type="GO" id="GO:0000281">
    <property type="term" value="P:mitotic cytokinesis"/>
    <property type="evidence" value="ECO:0000303"/>
    <property type="project" value="ComplexPortal"/>
</dbReference>
<dbReference type="GO" id="GO:0044878">
    <property type="term" value="P:mitotic cytokinesis checkpoint signaling"/>
    <property type="evidence" value="ECO:0000250"/>
    <property type="project" value="UniProtKB"/>
</dbReference>
<dbReference type="GO" id="GO:1990758">
    <property type="term" value="P:mitotic sister chromatid biorientation"/>
    <property type="evidence" value="ECO:0000314"/>
    <property type="project" value="UniProtKB"/>
</dbReference>
<dbReference type="GO" id="GO:0090307">
    <property type="term" value="P:mitotic spindle assembly"/>
    <property type="evidence" value="ECO:0000303"/>
    <property type="project" value="ComplexPortal"/>
</dbReference>
<dbReference type="GO" id="GO:0051256">
    <property type="term" value="P:mitotic spindle midzone assembly"/>
    <property type="evidence" value="ECO:0000315"/>
    <property type="project" value="UniProtKB"/>
</dbReference>
<dbReference type="GO" id="GO:0007052">
    <property type="term" value="P:mitotic spindle organization"/>
    <property type="evidence" value="ECO:0000318"/>
    <property type="project" value="GO_Central"/>
</dbReference>
<dbReference type="GO" id="GO:0002903">
    <property type="term" value="P:negative regulation of B cell apoptotic process"/>
    <property type="evidence" value="ECO:0000314"/>
    <property type="project" value="UniProtKB"/>
</dbReference>
<dbReference type="GO" id="GO:0160049">
    <property type="term" value="P:negative regulation of cGAS/STING signaling pathway"/>
    <property type="evidence" value="ECO:0000314"/>
    <property type="project" value="UniProt"/>
</dbReference>
<dbReference type="GO" id="GO:0032466">
    <property type="term" value="P:negative regulation of cytokinesis"/>
    <property type="evidence" value="ECO:0000250"/>
    <property type="project" value="UniProtKB"/>
</dbReference>
<dbReference type="GO" id="GO:0045824">
    <property type="term" value="P:negative regulation of innate immune response"/>
    <property type="evidence" value="ECO:0000314"/>
    <property type="project" value="UniProt"/>
</dbReference>
<dbReference type="GO" id="GO:0000122">
    <property type="term" value="P:negative regulation of transcription by RNA polymerase II"/>
    <property type="evidence" value="ECO:0000314"/>
    <property type="project" value="UniProtKB"/>
</dbReference>
<dbReference type="GO" id="GO:1902425">
    <property type="term" value="P:positive regulation of attachment of mitotic spindle microtubules to kinetochore"/>
    <property type="evidence" value="ECO:0000303"/>
    <property type="project" value="ComplexPortal"/>
</dbReference>
<dbReference type="GO" id="GO:0032467">
    <property type="term" value="P:positive regulation of cytokinesis"/>
    <property type="evidence" value="ECO:0000315"/>
    <property type="project" value="UniProtKB"/>
</dbReference>
<dbReference type="GO" id="GO:1905116">
    <property type="term" value="P:positive regulation of lateral attachment of mitotic spindle microtubules to kinetochore"/>
    <property type="evidence" value="ECO:0000314"/>
    <property type="project" value="CACAO"/>
</dbReference>
<dbReference type="GO" id="GO:0031117">
    <property type="term" value="P:positive regulation of microtubule depolymerization"/>
    <property type="evidence" value="ECO:0000314"/>
    <property type="project" value="UniProtKB"/>
</dbReference>
<dbReference type="GO" id="GO:0090267">
    <property type="term" value="P:positive regulation of mitotic cell cycle spindle assembly checkpoint"/>
    <property type="evidence" value="ECO:0000303"/>
    <property type="project" value="ComplexPortal"/>
</dbReference>
<dbReference type="GO" id="GO:1903490">
    <property type="term" value="P:positive regulation of mitotic cytokinesis"/>
    <property type="evidence" value="ECO:0000303"/>
    <property type="project" value="ComplexPortal"/>
</dbReference>
<dbReference type="GO" id="GO:0062033">
    <property type="term" value="P:positive regulation of mitotic sister chromatid segregation"/>
    <property type="evidence" value="ECO:0000314"/>
    <property type="project" value="UniProtKB"/>
</dbReference>
<dbReference type="GO" id="GO:1901970">
    <property type="term" value="P:positive regulation of mitotic sister chromatid separation"/>
    <property type="evidence" value="ECO:0000303"/>
    <property type="project" value="ComplexPortal"/>
</dbReference>
<dbReference type="GO" id="GO:0032206">
    <property type="term" value="P:positive regulation of telomere maintenance"/>
    <property type="evidence" value="ECO:0000315"/>
    <property type="project" value="BHF-UCL"/>
</dbReference>
<dbReference type="GO" id="GO:0043687">
    <property type="term" value="P:post-translational protein modification"/>
    <property type="evidence" value="ECO:0000250"/>
    <property type="project" value="UniProtKB"/>
</dbReference>
<dbReference type="GO" id="GO:0034501">
    <property type="term" value="P:protein localization to kinetochore"/>
    <property type="evidence" value="ECO:0000315"/>
    <property type="project" value="UniProtKB"/>
</dbReference>
<dbReference type="GO" id="GO:0051983">
    <property type="term" value="P:regulation of chromosome segregation"/>
    <property type="evidence" value="ECO:0000304"/>
    <property type="project" value="UniProtKB"/>
</dbReference>
<dbReference type="GO" id="GO:0032465">
    <property type="term" value="P:regulation of cytokinesis"/>
    <property type="evidence" value="ECO:0000318"/>
    <property type="project" value="GO_Central"/>
</dbReference>
<dbReference type="GO" id="GO:1901796">
    <property type="term" value="P:regulation of signal transduction by p53 class mediator"/>
    <property type="evidence" value="ECO:0000304"/>
    <property type="project" value="Reactome"/>
</dbReference>
<dbReference type="GO" id="GO:0140273">
    <property type="term" value="P:repair of mitotic kinetochore microtubule attachment defect"/>
    <property type="evidence" value="ECO:0000314"/>
    <property type="project" value="UniProtKB"/>
</dbReference>
<dbReference type="GO" id="GO:0007051">
    <property type="term" value="P:spindle organization"/>
    <property type="evidence" value="ECO:0000315"/>
    <property type="project" value="UniProtKB"/>
</dbReference>
<dbReference type="DisProt" id="DP02389"/>
<dbReference type="FunFam" id="3.30.200.20:FF:000042">
    <property type="entry name" value="Aurora kinase A"/>
    <property type="match status" value="1"/>
</dbReference>
<dbReference type="FunFam" id="1.10.510.10:FF:000235">
    <property type="entry name" value="Serine/threonine-protein kinase ark1"/>
    <property type="match status" value="1"/>
</dbReference>
<dbReference type="Gene3D" id="3.30.200.20">
    <property type="entry name" value="Phosphorylase Kinase, domain 1"/>
    <property type="match status" value="1"/>
</dbReference>
<dbReference type="Gene3D" id="1.10.510.10">
    <property type="entry name" value="Transferase(Phosphotransferase) domain 1"/>
    <property type="match status" value="1"/>
</dbReference>
<dbReference type="InterPro" id="IPR030616">
    <property type="entry name" value="Aur-like"/>
</dbReference>
<dbReference type="InterPro" id="IPR011009">
    <property type="entry name" value="Kinase-like_dom_sf"/>
</dbReference>
<dbReference type="InterPro" id="IPR000719">
    <property type="entry name" value="Prot_kinase_dom"/>
</dbReference>
<dbReference type="InterPro" id="IPR017441">
    <property type="entry name" value="Protein_kinase_ATP_BS"/>
</dbReference>
<dbReference type="InterPro" id="IPR008271">
    <property type="entry name" value="Ser/Thr_kinase_AS"/>
</dbReference>
<dbReference type="PANTHER" id="PTHR24350">
    <property type="entry name" value="SERINE/THREONINE-PROTEIN KINASE IAL-RELATED"/>
    <property type="match status" value="1"/>
</dbReference>
<dbReference type="Pfam" id="PF00069">
    <property type="entry name" value="Pkinase"/>
    <property type="match status" value="1"/>
</dbReference>
<dbReference type="SMART" id="SM00220">
    <property type="entry name" value="S_TKc"/>
    <property type="match status" value="1"/>
</dbReference>
<dbReference type="SUPFAM" id="SSF56112">
    <property type="entry name" value="Protein kinase-like (PK-like)"/>
    <property type="match status" value="1"/>
</dbReference>
<dbReference type="PROSITE" id="PS00107">
    <property type="entry name" value="PROTEIN_KINASE_ATP"/>
    <property type="match status" value="1"/>
</dbReference>
<dbReference type="PROSITE" id="PS50011">
    <property type="entry name" value="PROTEIN_KINASE_DOM"/>
    <property type="match status" value="1"/>
</dbReference>
<dbReference type="PROSITE" id="PS00108">
    <property type="entry name" value="PROTEIN_KINASE_ST"/>
    <property type="match status" value="1"/>
</dbReference>
<keyword id="KW-0002">3D-structure</keyword>
<keyword id="KW-0007">Acetylation</keyword>
<keyword id="KW-0025">Alternative splicing</keyword>
<keyword id="KW-0067">ATP-binding</keyword>
<keyword id="KW-0131">Cell cycle</keyword>
<keyword id="KW-0132">Cell division</keyword>
<keyword id="KW-0137">Centromere</keyword>
<keyword id="KW-0158">Chromosome</keyword>
<keyword id="KW-0963">Cytoplasm</keyword>
<keyword id="KW-0206">Cytoskeleton</keyword>
<keyword id="KW-0418">Kinase</keyword>
<keyword id="KW-0995">Kinetochore</keyword>
<keyword id="KW-0498">Mitosis</keyword>
<keyword id="KW-0547">Nucleotide-binding</keyword>
<keyword id="KW-0539">Nucleus</keyword>
<keyword id="KW-0597">Phosphoprotein</keyword>
<keyword id="KW-1267">Proteomics identification</keyword>
<keyword id="KW-1185">Reference proteome</keyword>
<keyword id="KW-0723">Serine/threonine-protein kinase</keyword>
<keyword id="KW-0808">Transferase</keyword>
<keyword id="KW-0832">Ubl conjugation</keyword>
<gene>
    <name type="primary">AURKB</name>
    <name evidence="58" type="synonym">AIK2</name>
    <name evidence="57" type="synonym">AIM1</name>
    <name type="synonym">AIRK2</name>
    <name evidence="56" type="synonym">ARK2</name>
    <name type="synonym">STK1</name>
    <name evidence="58" type="synonym">STK12</name>
    <name type="synonym">STK5</name>
</gene>
<sequence length="344" mass="39311">MAQKENSYPWPYGRQTAPSGLSTLPQRVLRKEPVTPSALVLMSRSNVQPTAAPGQKVMENSSGTPDILTRHFTIDDFEIGRPLGKGKFGNVYLAREKKSHFIVALKVLFKSQIEKEGVEHQLRREIEIQAHLHHPNILRLYNYFYDRRRIYLILEYAPRGELYKELQKSCTFDEQRTATIMEELADALMYCHGKKVIHRDIKPENLLLGLKGELKIADFGWSVHAPSLRRKTMCGTLDYLPPEMIEGRMHNEKVDLWCIGVLCYELLVGNPPFESASHNETYRRIVKVDLKFPASVPMGAQDLISKLLRHNPSERLPLAQVSAHPWVRANSRRVLPPSALQSVA</sequence>
<evidence type="ECO:0000250" key="1">
    <source>
        <dbReference type="UniProtKB" id="O70126"/>
    </source>
</evidence>
<evidence type="ECO:0000255" key="2">
    <source>
        <dbReference type="PROSITE-ProRule" id="PRU00159"/>
    </source>
</evidence>
<evidence type="ECO:0000255" key="3">
    <source>
        <dbReference type="PROSITE-ProRule" id="PRU10027"/>
    </source>
</evidence>
<evidence type="ECO:0000256" key="4">
    <source>
        <dbReference type="SAM" id="MobiDB-lite"/>
    </source>
</evidence>
<evidence type="ECO:0000269" key="5">
    <source>
    </source>
</evidence>
<evidence type="ECO:0000269" key="6">
    <source>
    </source>
</evidence>
<evidence type="ECO:0000269" key="7">
    <source>
    </source>
</evidence>
<evidence type="ECO:0000269" key="8">
    <source>
    </source>
</evidence>
<evidence type="ECO:0000269" key="9">
    <source>
    </source>
</evidence>
<evidence type="ECO:0000269" key="10">
    <source>
    </source>
</evidence>
<evidence type="ECO:0000269" key="11">
    <source>
    </source>
</evidence>
<evidence type="ECO:0000269" key="12">
    <source>
    </source>
</evidence>
<evidence type="ECO:0000269" key="13">
    <source>
    </source>
</evidence>
<evidence type="ECO:0000269" key="14">
    <source>
    </source>
</evidence>
<evidence type="ECO:0000269" key="15">
    <source>
    </source>
</evidence>
<evidence type="ECO:0000269" key="16">
    <source>
    </source>
</evidence>
<evidence type="ECO:0000269" key="17">
    <source>
    </source>
</evidence>
<evidence type="ECO:0000269" key="18">
    <source>
    </source>
</evidence>
<evidence type="ECO:0000269" key="19">
    <source>
    </source>
</evidence>
<evidence type="ECO:0000269" key="20">
    <source>
    </source>
</evidence>
<evidence type="ECO:0000269" key="21">
    <source>
    </source>
</evidence>
<evidence type="ECO:0000269" key="22">
    <source>
    </source>
</evidence>
<evidence type="ECO:0000269" key="23">
    <source>
    </source>
</evidence>
<evidence type="ECO:0000269" key="24">
    <source>
    </source>
</evidence>
<evidence type="ECO:0000269" key="25">
    <source>
    </source>
</evidence>
<evidence type="ECO:0000269" key="26">
    <source>
    </source>
</evidence>
<evidence type="ECO:0000269" key="27">
    <source>
    </source>
</evidence>
<evidence type="ECO:0000269" key="28">
    <source>
    </source>
</evidence>
<evidence type="ECO:0000269" key="29">
    <source>
    </source>
</evidence>
<evidence type="ECO:0000269" key="30">
    <source>
    </source>
</evidence>
<evidence type="ECO:0000269" key="31">
    <source>
    </source>
</evidence>
<evidence type="ECO:0000269" key="32">
    <source>
    </source>
</evidence>
<evidence type="ECO:0000269" key="33">
    <source>
    </source>
</evidence>
<evidence type="ECO:0000269" key="34">
    <source>
    </source>
</evidence>
<evidence type="ECO:0000269" key="35">
    <source>
    </source>
</evidence>
<evidence type="ECO:0000269" key="36">
    <source>
    </source>
</evidence>
<evidence type="ECO:0000269" key="37">
    <source>
    </source>
</evidence>
<evidence type="ECO:0000269" key="38">
    <source>
    </source>
</evidence>
<evidence type="ECO:0000269" key="39">
    <source>
    </source>
</evidence>
<evidence type="ECO:0000269" key="40">
    <source>
    </source>
</evidence>
<evidence type="ECO:0000269" key="41">
    <source>
    </source>
</evidence>
<evidence type="ECO:0000269" key="42">
    <source>
    </source>
</evidence>
<evidence type="ECO:0000269" key="43">
    <source>
    </source>
</evidence>
<evidence type="ECO:0000269" key="44">
    <source>
    </source>
</evidence>
<evidence type="ECO:0000269" key="45">
    <source>
    </source>
</evidence>
<evidence type="ECO:0000269" key="46">
    <source>
    </source>
</evidence>
<evidence type="ECO:0000269" key="47">
    <source>
    </source>
</evidence>
<evidence type="ECO:0000269" key="48">
    <source>
    </source>
</evidence>
<evidence type="ECO:0000269" key="49">
    <source>
    </source>
</evidence>
<evidence type="ECO:0000269" key="50">
    <source ref="5"/>
</evidence>
<evidence type="ECO:0000269" key="51">
    <source ref="7"/>
</evidence>
<evidence type="ECO:0000303" key="52">
    <source>
    </source>
</evidence>
<evidence type="ECO:0000303" key="53">
    <source>
    </source>
</evidence>
<evidence type="ECO:0000303" key="54">
    <source>
    </source>
</evidence>
<evidence type="ECO:0000303" key="55">
    <source>
    </source>
</evidence>
<evidence type="ECO:0000303" key="56">
    <source>
    </source>
</evidence>
<evidence type="ECO:0000303" key="57">
    <source>
    </source>
</evidence>
<evidence type="ECO:0000303" key="58">
    <source>
    </source>
</evidence>
<evidence type="ECO:0000305" key="59"/>
<evidence type="ECO:0000305" key="60">
    <source>
    </source>
</evidence>
<evidence type="ECO:0007744" key="61">
    <source>
    </source>
</evidence>
<evidence type="ECO:0007744" key="62">
    <source>
    </source>
</evidence>
<evidence type="ECO:0007744" key="63">
    <source>
    </source>
</evidence>
<evidence type="ECO:0007829" key="64">
    <source>
        <dbReference type="PDB" id="4AF3"/>
    </source>
</evidence>